<dbReference type="EMBL" id="X01818">
    <property type="protein sequence ID" value="CAA25960.1"/>
    <property type="molecule type" value="Genomic_DNA"/>
</dbReference>
<dbReference type="EMBL" id="U00096">
    <property type="protein sequence ID" value="AAC75655.1"/>
    <property type="molecule type" value="Genomic_DNA"/>
</dbReference>
<dbReference type="EMBL" id="AP009048">
    <property type="protein sequence ID" value="BAA16491.1"/>
    <property type="molecule type" value="Genomic_DNA"/>
</dbReference>
<dbReference type="PIR" id="S07951">
    <property type="entry name" value="R5EC19"/>
</dbReference>
<dbReference type="RefSeq" id="NP_417097.1">
    <property type="nucleotide sequence ID" value="NC_000913.3"/>
</dbReference>
<dbReference type="RefSeq" id="WP_000065253.1">
    <property type="nucleotide sequence ID" value="NZ_STEB01000040.1"/>
</dbReference>
<dbReference type="PDB" id="2J28">
    <property type="method" value="EM"/>
    <property type="resolution" value="8.00 A"/>
    <property type="chains" value="P=2-115"/>
</dbReference>
<dbReference type="PDB" id="2RDO">
    <property type="method" value="EM"/>
    <property type="resolution" value="9.10 A"/>
    <property type="chains" value="P=2-115"/>
</dbReference>
<dbReference type="PDB" id="3BBX">
    <property type="method" value="EM"/>
    <property type="resolution" value="10.00 A"/>
    <property type="chains" value="P=2-115"/>
</dbReference>
<dbReference type="PDB" id="3J5L">
    <property type="method" value="EM"/>
    <property type="resolution" value="6.60 A"/>
    <property type="chains" value="P=2-115"/>
</dbReference>
<dbReference type="PDB" id="3J7Z">
    <property type="method" value="EM"/>
    <property type="resolution" value="3.90 A"/>
    <property type="chains" value="P=1-115"/>
</dbReference>
<dbReference type="PDB" id="3J8G">
    <property type="method" value="EM"/>
    <property type="resolution" value="5.00 A"/>
    <property type="chains" value="P=1-115"/>
</dbReference>
<dbReference type="PDB" id="3J9Y">
    <property type="method" value="EM"/>
    <property type="resolution" value="3.90 A"/>
    <property type="chains" value="P=1-115"/>
</dbReference>
<dbReference type="PDB" id="3J9Z">
    <property type="method" value="EM"/>
    <property type="resolution" value="3.60 A"/>
    <property type="chains" value="LM=2-115"/>
</dbReference>
<dbReference type="PDB" id="3JA1">
    <property type="method" value="EM"/>
    <property type="resolution" value="3.60 A"/>
    <property type="chains" value="LR=2-115"/>
</dbReference>
<dbReference type="PDB" id="3JBU">
    <property type="method" value="EM"/>
    <property type="resolution" value="3.64 A"/>
    <property type="chains" value="p=1-115"/>
</dbReference>
<dbReference type="PDB" id="3JBV">
    <property type="method" value="EM"/>
    <property type="resolution" value="3.32 A"/>
    <property type="chains" value="p=1-115"/>
</dbReference>
<dbReference type="PDB" id="3JCD">
    <property type="method" value="EM"/>
    <property type="resolution" value="3.70 A"/>
    <property type="chains" value="P=1-115"/>
</dbReference>
<dbReference type="PDB" id="3JCE">
    <property type="method" value="EM"/>
    <property type="resolution" value="3.20 A"/>
    <property type="chains" value="P=1-115"/>
</dbReference>
<dbReference type="PDB" id="3JCJ">
    <property type="method" value="EM"/>
    <property type="resolution" value="3.70 A"/>
    <property type="chains" value="O=1-115"/>
</dbReference>
<dbReference type="PDB" id="3JCN">
    <property type="method" value="EM"/>
    <property type="resolution" value="4.60 A"/>
    <property type="chains" value="P=1-115"/>
</dbReference>
<dbReference type="PDB" id="4CSU">
    <property type="method" value="EM"/>
    <property type="resolution" value="5.50 A"/>
    <property type="chains" value="P=2-115"/>
</dbReference>
<dbReference type="PDB" id="4U1U">
    <property type="method" value="X-ray"/>
    <property type="resolution" value="2.95 A"/>
    <property type="chains" value="BP/DP=2-115"/>
</dbReference>
<dbReference type="PDB" id="4U1V">
    <property type="method" value="X-ray"/>
    <property type="resolution" value="3.00 A"/>
    <property type="chains" value="BP/DP=2-115"/>
</dbReference>
<dbReference type="PDB" id="4U20">
    <property type="method" value="X-ray"/>
    <property type="resolution" value="2.90 A"/>
    <property type="chains" value="BP/DP=2-115"/>
</dbReference>
<dbReference type="PDB" id="4U24">
    <property type="method" value="X-ray"/>
    <property type="resolution" value="2.90 A"/>
    <property type="chains" value="BP/DP=2-115"/>
</dbReference>
<dbReference type="PDB" id="4U25">
    <property type="method" value="X-ray"/>
    <property type="resolution" value="2.90 A"/>
    <property type="chains" value="BP/DP=2-115"/>
</dbReference>
<dbReference type="PDB" id="4U26">
    <property type="method" value="X-ray"/>
    <property type="resolution" value="2.80 A"/>
    <property type="chains" value="BP/DP=2-115"/>
</dbReference>
<dbReference type="PDB" id="4U27">
    <property type="method" value="X-ray"/>
    <property type="resolution" value="2.80 A"/>
    <property type="chains" value="BP/DP=2-115"/>
</dbReference>
<dbReference type="PDB" id="4UY8">
    <property type="method" value="EM"/>
    <property type="resolution" value="3.80 A"/>
    <property type="chains" value="P=2-115"/>
</dbReference>
<dbReference type="PDB" id="4V47">
    <property type="method" value="EM"/>
    <property type="resolution" value="12.30 A"/>
    <property type="chains" value="AN=2-115"/>
</dbReference>
<dbReference type="PDB" id="4V48">
    <property type="method" value="EM"/>
    <property type="resolution" value="11.50 A"/>
    <property type="chains" value="AN=2-115"/>
</dbReference>
<dbReference type="PDB" id="4V4H">
    <property type="method" value="X-ray"/>
    <property type="resolution" value="3.46 A"/>
    <property type="chains" value="BP/DP=1-115"/>
</dbReference>
<dbReference type="PDB" id="4V4Q">
    <property type="method" value="X-ray"/>
    <property type="resolution" value="3.46 A"/>
    <property type="chains" value="BP/DP=2-115"/>
</dbReference>
<dbReference type="PDB" id="4V4V">
    <property type="method" value="EM"/>
    <property type="resolution" value="15.00 A"/>
    <property type="chains" value="BN=2-115"/>
</dbReference>
<dbReference type="PDB" id="4V4W">
    <property type="method" value="EM"/>
    <property type="resolution" value="15.00 A"/>
    <property type="chains" value="BN=2-115"/>
</dbReference>
<dbReference type="PDB" id="4V50">
    <property type="method" value="X-ray"/>
    <property type="resolution" value="3.22 A"/>
    <property type="chains" value="BP/DP=2-115"/>
</dbReference>
<dbReference type="PDB" id="4V52">
    <property type="method" value="X-ray"/>
    <property type="resolution" value="3.21 A"/>
    <property type="chains" value="BP/DP=2-115"/>
</dbReference>
<dbReference type="PDB" id="4V53">
    <property type="method" value="X-ray"/>
    <property type="resolution" value="3.54 A"/>
    <property type="chains" value="BP/DP=2-115"/>
</dbReference>
<dbReference type="PDB" id="4V54">
    <property type="method" value="X-ray"/>
    <property type="resolution" value="3.30 A"/>
    <property type="chains" value="BP/DP=2-115"/>
</dbReference>
<dbReference type="PDB" id="4V55">
    <property type="method" value="X-ray"/>
    <property type="resolution" value="4.00 A"/>
    <property type="chains" value="BP/DP=2-115"/>
</dbReference>
<dbReference type="PDB" id="4V56">
    <property type="method" value="X-ray"/>
    <property type="resolution" value="3.93 A"/>
    <property type="chains" value="BP/DP=2-115"/>
</dbReference>
<dbReference type="PDB" id="4V57">
    <property type="method" value="X-ray"/>
    <property type="resolution" value="3.50 A"/>
    <property type="chains" value="BP/DP=2-115"/>
</dbReference>
<dbReference type="PDB" id="4V5B">
    <property type="method" value="X-ray"/>
    <property type="resolution" value="3.74 A"/>
    <property type="chains" value="AP/CP=2-115"/>
</dbReference>
<dbReference type="PDB" id="4V5H">
    <property type="method" value="EM"/>
    <property type="resolution" value="5.80 A"/>
    <property type="chains" value="BP=2-115"/>
</dbReference>
<dbReference type="PDB" id="4V5Y">
    <property type="method" value="X-ray"/>
    <property type="resolution" value="4.45 A"/>
    <property type="chains" value="BP/DP=2-115"/>
</dbReference>
<dbReference type="PDB" id="4V64">
    <property type="method" value="X-ray"/>
    <property type="resolution" value="3.50 A"/>
    <property type="chains" value="BP/DP=2-115"/>
</dbReference>
<dbReference type="PDB" id="4V65">
    <property type="method" value="EM"/>
    <property type="resolution" value="9.00 A"/>
    <property type="chains" value="BI=1-115"/>
</dbReference>
<dbReference type="PDB" id="4V66">
    <property type="method" value="EM"/>
    <property type="resolution" value="9.00 A"/>
    <property type="chains" value="BI=1-115"/>
</dbReference>
<dbReference type="PDB" id="4V69">
    <property type="method" value="EM"/>
    <property type="resolution" value="6.70 A"/>
    <property type="chains" value="BP=2-115"/>
</dbReference>
<dbReference type="PDB" id="4V6C">
    <property type="method" value="X-ray"/>
    <property type="resolution" value="3.19 A"/>
    <property type="chains" value="BP/DP=1-115"/>
</dbReference>
<dbReference type="PDB" id="4V6D">
    <property type="method" value="X-ray"/>
    <property type="resolution" value="3.81 A"/>
    <property type="chains" value="BP/DP=1-115"/>
</dbReference>
<dbReference type="PDB" id="4V6E">
    <property type="method" value="X-ray"/>
    <property type="resolution" value="3.71 A"/>
    <property type="chains" value="BP/DP=1-115"/>
</dbReference>
<dbReference type="PDB" id="4V6K">
    <property type="method" value="EM"/>
    <property type="resolution" value="8.25 A"/>
    <property type="chains" value="AQ=1-115"/>
</dbReference>
<dbReference type="PDB" id="4V6L">
    <property type="method" value="EM"/>
    <property type="resolution" value="13.20 A"/>
    <property type="chains" value="BQ=1-115"/>
</dbReference>
<dbReference type="PDB" id="4V6M">
    <property type="method" value="EM"/>
    <property type="resolution" value="7.10 A"/>
    <property type="chains" value="BP=2-115"/>
</dbReference>
<dbReference type="PDB" id="4V6N">
    <property type="method" value="EM"/>
    <property type="resolution" value="12.10 A"/>
    <property type="chains" value="AR=2-115"/>
</dbReference>
<dbReference type="PDB" id="4V6O">
    <property type="method" value="EM"/>
    <property type="resolution" value="14.70 A"/>
    <property type="chains" value="BR=2-115"/>
</dbReference>
<dbReference type="PDB" id="4V6P">
    <property type="method" value="EM"/>
    <property type="resolution" value="13.50 A"/>
    <property type="chains" value="BR=2-115"/>
</dbReference>
<dbReference type="PDB" id="4V6Q">
    <property type="method" value="EM"/>
    <property type="resolution" value="11.50 A"/>
    <property type="chains" value="BR=2-115"/>
</dbReference>
<dbReference type="PDB" id="4V6R">
    <property type="method" value="EM"/>
    <property type="resolution" value="11.50 A"/>
    <property type="chains" value="BR=2-115"/>
</dbReference>
<dbReference type="PDB" id="4V6S">
    <property type="method" value="EM"/>
    <property type="resolution" value="13.10 A"/>
    <property type="chains" value="AR=2-115"/>
</dbReference>
<dbReference type="PDB" id="4V6T">
    <property type="method" value="EM"/>
    <property type="resolution" value="8.30 A"/>
    <property type="chains" value="BP=2-115"/>
</dbReference>
<dbReference type="PDB" id="4V6V">
    <property type="method" value="EM"/>
    <property type="resolution" value="9.80 A"/>
    <property type="chains" value="BT=2-115"/>
</dbReference>
<dbReference type="PDB" id="4V6Y">
    <property type="method" value="EM"/>
    <property type="resolution" value="12.00 A"/>
    <property type="chains" value="BP=1-115"/>
</dbReference>
<dbReference type="PDB" id="4V6Z">
    <property type="method" value="EM"/>
    <property type="resolution" value="12.00 A"/>
    <property type="chains" value="BP=1-115"/>
</dbReference>
<dbReference type="PDB" id="4V70">
    <property type="method" value="EM"/>
    <property type="resolution" value="17.00 A"/>
    <property type="chains" value="BP=1-115"/>
</dbReference>
<dbReference type="PDB" id="4V71">
    <property type="method" value="EM"/>
    <property type="resolution" value="20.00 A"/>
    <property type="chains" value="BP=1-115"/>
</dbReference>
<dbReference type="PDB" id="4V72">
    <property type="method" value="EM"/>
    <property type="resolution" value="13.00 A"/>
    <property type="chains" value="BP=1-115"/>
</dbReference>
<dbReference type="PDB" id="4V73">
    <property type="method" value="EM"/>
    <property type="resolution" value="15.00 A"/>
    <property type="chains" value="BP=1-115"/>
</dbReference>
<dbReference type="PDB" id="4V74">
    <property type="method" value="EM"/>
    <property type="resolution" value="17.00 A"/>
    <property type="chains" value="BP=1-115"/>
</dbReference>
<dbReference type="PDB" id="4V75">
    <property type="method" value="EM"/>
    <property type="resolution" value="12.00 A"/>
    <property type="chains" value="BP=1-115"/>
</dbReference>
<dbReference type="PDB" id="4V76">
    <property type="method" value="EM"/>
    <property type="resolution" value="17.00 A"/>
    <property type="chains" value="BP=1-115"/>
</dbReference>
<dbReference type="PDB" id="4V77">
    <property type="method" value="EM"/>
    <property type="resolution" value="17.00 A"/>
    <property type="chains" value="BP=1-115"/>
</dbReference>
<dbReference type="PDB" id="4V78">
    <property type="method" value="EM"/>
    <property type="resolution" value="20.00 A"/>
    <property type="chains" value="BP=1-115"/>
</dbReference>
<dbReference type="PDB" id="4V79">
    <property type="method" value="EM"/>
    <property type="resolution" value="15.00 A"/>
    <property type="chains" value="BP=1-115"/>
</dbReference>
<dbReference type="PDB" id="4V7A">
    <property type="method" value="EM"/>
    <property type="resolution" value="9.00 A"/>
    <property type="chains" value="BP=1-115"/>
</dbReference>
<dbReference type="PDB" id="4V7B">
    <property type="method" value="EM"/>
    <property type="resolution" value="6.80 A"/>
    <property type="chains" value="BP=1-115"/>
</dbReference>
<dbReference type="PDB" id="4V7C">
    <property type="method" value="EM"/>
    <property type="resolution" value="7.60 A"/>
    <property type="chains" value="BR=2-115"/>
</dbReference>
<dbReference type="PDB" id="4V7D">
    <property type="method" value="EM"/>
    <property type="resolution" value="7.60 A"/>
    <property type="chains" value="AS=2-115"/>
</dbReference>
<dbReference type="PDB" id="4V7I">
    <property type="method" value="EM"/>
    <property type="resolution" value="9.60 A"/>
    <property type="chains" value="AP=1-115"/>
</dbReference>
<dbReference type="PDB" id="4V7S">
    <property type="method" value="X-ray"/>
    <property type="resolution" value="3.25 A"/>
    <property type="chains" value="BP/DP=2-115"/>
</dbReference>
<dbReference type="PDB" id="4V7T">
    <property type="method" value="X-ray"/>
    <property type="resolution" value="3.19 A"/>
    <property type="chains" value="BP/DP=2-115"/>
</dbReference>
<dbReference type="PDB" id="4V7U">
    <property type="method" value="X-ray"/>
    <property type="resolution" value="3.10 A"/>
    <property type="chains" value="BP/DP=2-115"/>
</dbReference>
<dbReference type="PDB" id="4V7V">
    <property type="method" value="X-ray"/>
    <property type="resolution" value="3.29 A"/>
    <property type="chains" value="BP/DP=2-115"/>
</dbReference>
<dbReference type="PDB" id="4V85">
    <property type="method" value="X-ray"/>
    <property type="resolution" value="3.20 A"/>
    <property type="chains" value="BT=1-115"/>
</dbReference>
<dbReference type="PDB" id="4V89">
    <property type="method" value="X-ray"/>
    <property type="resolution" value="3.70 A"/>
    <property type="chains" value="BT=1-115"/>
</dbReference>
<dbReference type="PDB" id="4V9C">
    <property type="method" value="X-ray"/>
    <property type="resolution" value="3.30 A"/>
    <property type="chains" value="BP/DP=1-115"/>
</dbReference>
<dbReference type="PDB" id="4V9D">
    <property type="method" value="X-ray"/>
    <property type="resolution" value="3.00 A"/>
    <property type="chains" value="CP/DP=2-115"/>
</dbReference>
<dbReference type="PDB" id="4V9O">
    <property type="method" value="X-ray"/>
    <property type="resolution" value="2.90 A"/>
    <property type="chains" value="AP/CP/EP/GP=1-115"/>
</dbReference>
<dbReference type="PDB" id="4V9P">
    <property type="method" value="X-ray"/>
    <property type="resolution" value="2.90 A"/>
    <property type="chains" value="AP/CP/EP/GP=1-115"/>
</dbReference>
<dbReference type="PDB" id="4WF1">
    <property type="method" value="X-ray"/>
    <property type="resolution" value="3.09 A"/>
    <property type="chains" value="BP/DP=2-115"/>
</dbReference>
<dbReference type="PDB" id="4WOI">
    <property type="method" value="X-ray"/>
    <property type="resolution" value="3.00 A"/>
    <property type="chains" value="BP/CP=1-115"/>
</dbReference>
<dbReference type="PDB" id="4WWW">
    <property type="method" value="X-ray"/>
    <property type="resolution" value="3.10 A"/>
    <property type="chains" value="RP/YP=2-115"/>
</dbReference>
<dbReference type="PDB" id="4YBB">
    <property type="method" value="X-ray"/>
    <property type="resolution" value="2.10 A"/>
    <property type="chains" value="CQ/DQ=2-115"/>
</dbReference>
<dbReference type="PDB" id="5ADY">
    <property type="method" value="EM"/>
    <property type="resolution" value="4.50 A"/>
    <property type="chains" value="P=1-115"/>
</dbReference>
<dbReference type="PDB" id="5AFI">
    <property type="method" value="EM"/>
    <property type="resolution" value="2.90 A"/>
    <property type="chains" value="P=1-115"/>
</dbReference>
<dbReference type="PDB" id="5AKA">
    <property type="method" value="EM"/>
    <property type="resolution" value="5.70 A"/>
    <property type="chains" value="P=2-115"/>
</dbReference>
<dbReference type="PDB" id="5GAD">
    <property type="method" value="EM"/>
    <property type="resolution" value="3.70 A"/>
    <property type="chains" value="Q=1-115"/>
</dbReference>
<dbReference type="PDB" id="5GAE">
    <property type="method" value="EM"/>
    <property type="resolution" value="3.33 A"/>
    <property type="chains" value="Q=1-115"/>
</dbReference>
<dbReference type="PDB" id="5GAF">
    <property type="method" value="EM"/>
    <property type="resolution" value="4.30 A"/>
    <property type="chains" value="Q=2-115"/>
</dbReference>
<dbReference type="PDB" id="5GAG">
    <property type="method" value="EM"/>
    <property type="resolution" value="3.80 A"/>
    <property type="chains" value="Q=1-115"/>
</dbReference>
<dbReference type="PDB" id="5GAH">
    <property type="method" value="EM"/>
    <property type="resolution" value="3.80 A"/>
    <property type="chains" value="Q=1-115"/>
</dbReference>
<dbReference type="PDB" id="5H5U">
    <property type="method" value="EM"/>
    <property type="resolution" value="3.00 A"/>
    <property type="chains" value="Q=2-115"/>
</dbReference>
<dbReference type="PDB" id="5IQR">
    <property type="method" value="EM"/>
    <property type="resolution" value="3.00 A"/>
    <property type="chains" value="P=1-115"/>
</dbReference>
<dbReference type="PDB" id="5IT8">
    <property type="method" value="X-ray"/>
    <property type="resolution" value="3.12 A"/>
    <property type="chains" value="CQ/DQ=2-115"/>
</dbReference>
<dbReference type="PDB" id="5J5B">
    <property type="method" value="X-ray"/>
    <property type="resolution" value="2.80 A"/>
    <property type="chains" value="CQ/DQ=2-115"/>
</dbReference>
<dbReference type="PDB" id="5J7L">
    <property type="method" value="X-ray"/>
    <property type="resolution" value="3.00 A"/>
    <property type="chains" value="CQ/DQ=2-115"/>
</dbReference>
<dbReference type="PDB" id="5J88">
    <property type="method" value="X-ray"/>
    <property type="resolution" value="3.32 A"/>
    <property type="chains" value="CQ/DQ=2-115"/>
</dbReference>
<dbReference type="PDB" id="5J8A">
    <property type="method" value="X-ray"/>
    <property type="resolution" value="3.10 A"/>
    <property type="chains" value="CQ/DQ=2-115"/>
</dbReference>
<dbReference type="PDB" id="5J91">
    <property type="method" value="X-ray"/>
    <property type="resolution" value="2.96 A"/>
    <property type="chains" value="CQ/DQ=2-115"/>
</dbReference>
<dbReference type="PDB" id="5JC9">
    <property type="method" value="X-ray"/>
    <property type="resolution" value="3.03 A"/>
    <property type="chains" value="CQ/DQ=2-115"/>
</dbReference>
<dbReference type="PDB" id="5JTE">
    <property type="method" value="EM"/>
    <property type="resolution" value="3.60 A"/>
    <property type="chains" value="BP=1-115"/>
</dbReference>
<dbReference type="PDB" id="5JU8">
    <property type="method" value="EM"/>
    <property type="resolution" value="3.60 A"/>
    <property type="chains" value="BP=1-115"/>
</dbReference>
<dbReference type="PDB" id="5KCR">
    <property type="method" value="EM"/>
    <property type="resolution" value="3.60 A"/>
    <property type="chains" value="1T=1-115"/>
</dbReference>
<dbReference type="PDB" id="5KCS">
    <property type="method" value="EM"/>
    <property type="resolution" value="3.90 A"/>
    <property type="chains" value="1T=1-115"/>
</dbReference>
<dbReference type="PDB" id="5KPS">
    <property type="method" value="EM"/>
    <property type="resolution" value="3.90 A"/>
    <property type="chains" value="P=1-115"/>
</dbReference>
<dbReference type="PDB" id="5KPV">
    <property type="method" value="EM"/>
    <property type="resolution" value="4.10 A"/>
    <property type="chains" value="O=1-115"/>
</dbReference>
<dbReference type="PDB" id="5KPW">
    <property type="method" value="EM"/>
    <property type="resolution" value="3.90 A"/>
    <property type="chains" value="O=1-115"/>
</dbReference>
<dbReference type="PDB" id="5KPX">
    <property type="method" value="EM"/>
    <property type="resolution" value="3.90 A"/>
    <property type="chains" value="O=1-115"/>
</dbReference>
<dbReference type="PDB" id="5L3P">
    <property type="method" value="EM"/>
    <property type="resolution" value="3.70 A"/>
    <property type="chains" value="T=1-115"/>
</dbReference>
<dbReference type="PDB" id="5LZA">
    <property type="method" value="EM"/>
    <property type="resolution" value="3.60 A"/>
    <property type="chains" value="P=2-115"/>
</dbReference>
<dbReference type="PDB" id="5LZB">
    <property type="method" value="EM"/>
    <property type="resolution" value="5.30 A"/>
    <property type="chains" value="P=2-115"/>
</dbReference>
<dbReference type="PDB" id="5LZC">
    <property type="method" value="EM"/>
    <property type="resolution" value="4.80 A"/>
    <property type="chains" value="P=2-115"/>
</dbReference>
<dbReference type="PDB" id="5LZD">
    <property type="method" value="EM"/>
    <property type="resolution" value="3.40 A"/>
    <property type="chains" value="P=2-115"/>
</dbReference>
<dbReference type="PDB" id="5LZE">
    <property type="method" value="EM"/>
    <property type="resolution" value="3.50 A"/>
    <property type="chains" value="P=2-115"/>
</dbReference>
<dbReference type="PDB" id="5LZF">
    <property type="method" value="EM"/>
    <property type="resolution" value="4.60 A"/>
    <property type="chains" value="P=2-115"/>
</dbReference>
<dbReference type="PDB" id="5MDV">
    <property type="method" value="EM"/>
    <property type="resolution" value="2.97 A"/>
    <property type="chains" value="P=1-115"/>
</dbReference>
<dbReference type="PDB" id="5MDW">
    <property type="method" value="EM"/>
    <property type="resolution" value="3.06 A"/>
    <property type="chains" value="P=1-115"/>
</dbReference>
<dbReference type="PDB" id="5MDY">
    <property type="method" value="EM"/>
    <property type="resolution" value="3.35 A"/>
    <property type="chains" value="P=1-115"/>
</dbReference>
<dbReference type="PDB" id="5MDZ">
    <property type="method" value="EM"/>
    <property type="resolution" value="3.10 A"/>
    <property type="chains" value="P=1-115"/>
</dbReference>
<dbReference type="PDB" id="5MGP">
    <property type="method" value="EM"/>
    <property type="resolution" value="3.10 A"/>
    <property type="chains" value="P=2-115"/>
</dbReference>
<dbReference type="PDB" id="5NCO">
    <property type="method" value="EM"/>
    <property type="resolution" value="4.80 A"/>
    <property type="chains" value="Q=2-115"/>
</dbReference>
<dbReference type="PDB" id="5NP6">
    <property type="method" value="EM"/>
    <property type="resolution" value="3.60 A"/>
    <property type="chains" value="n=2-115"/>
</dbReference>
<dbReference type="PDB" id="5NWY">
    <property type="method" value="EM"/>
    <property type="resolution" value="2.93 A"/>
    <property type="chains" value="c=1-115"/>
</dbReference>
<dbReference type="PDB" id="5O2R">
    <property type="method" value="EM"/>
    <property type="resolution" value="3.40 A"/>
    <property type="chains" value="P=2-115"/>
</dbReference>
<dbReference type="PDB" id="5U4I">
    <property type="method" value="EM"/>
    <property type="resolution" value="3.50 A"/>
    <property type="chains" value="Q=1-115"/>
</dbReference>
<dbReference type="PDB" id="5U9F">
    <property type="method" value="EM"/>
    <property type="resolution" value="3.20 A"/>
    <property type="chains" value="18=1-115"/>
</dbReference>
<dbReference type="PDB" id="5U9G">
    <property type="method" value="EM"/>
    <property type="resolution" value="3.20 A"/>
    <property type="chains" value="18=1-115"/>
</dbReference>
<dbReference type="PDB" id="5UYK">
    <property type="method" value="EM"/>
    <property type="resolution" value="3.90 A"/>
    <property type="chains" value="18=2-115"/>
</dbReference>
<dbReference type="PDB" id="5UYL">
    <property type="method" value="EM"/>
    <property type="resolution" value="3.60 A"/>
    <property type="chains" value="18=2-115"/>
</dbReference>
<dbReference type="PDB" id="5UYM">
    <property type="method" value="EM"/>
    <property type="resolution" value="3.20 A"/>
    <property type="chains" value="18=2-115"/>
</dbReference>
<dbReference type="PDB" id="5UYN">
    <property type="method" value="EM"/>
    <property type="resolution" value="4.00 A"/>
    <property type="chains" value="18=2-115"/>
</dbReference>
<dbReference type="PDB" id="5UYP">
    <property type="method" value="EM"/>
    <property type="resolution" value="3.90 A"/>
    <property type="chains" value="18=2-115"/>
</dbReference>
<dbReference type="PDB" id="5UYQ">
    <property type="method" value="EM"/>
    <property type="resolution" value="3.80 A"/>
    <property type="chains" value="18=2-115"/>
</dbReference>
<dbReference type="PDB" id="5WDT">
    <property type="method" value="EM"/>
    <property type="resolution" value="3.00 A"/>
    <property type="chains" value="P=2-115"/>
</dbReference>
<dbReference type="PDB" id="5WE4">
    <property type="method" value="EM"/>
    <property type="resolution" value="3.10 A"/>
    <property type="chains" value="P=2-115"/>
</dbReference>
<dbReference type="PDB" id="5WE6">
    <property type="method" value="EM"/>
    <property type="resolution" value="3.40 A"/>
    <property type="chains" value="P=2-115"/>
</dbReference>
<dbReference type="PDB" id="5WF0">
    <property type="method" value="EM"/>
    <property type="resolution" value="3.60 A"/>
    <property type="chains" value="P=2-115"/>
</dbReference>
<dbReference type="PDB" id="5WFK">
    <property type="method" value="EM"/>
    <property type="resolution" value="3.40 A"/>
    <property type="chains" value="P=2-115"/>
</dbReference>
<dbReference type="PDB" id="5WFS">
    <property type="method" value="EM"/>
    <property type="resolution" value="3.00 A"/>
    <property type="chains" value="P=2-115"/>
</dbReference>
<dbReference type="PDB" id="6BU8">
    <property type="method" value="EM"/>
    <property type="resolution" value="3.50 A"/>
    <property type="chains" value="18=2-115"/>
</dbReference>
<dbReference type="PDB" id="6BY1">
    <property type="method" value="X-ray"/>
    <property type="resolution" value="3.94 A"/>
    <property type="chains" value="CP/DP=2-115"/>
</dbReference>
<dbReference type="PDB" id="6C4I">
    <property type="method" value="EM"/>
    <property type="resolution" value="3.24 A"/>
    <property type="chains" value="Q=1-115"/>
</dbReference>
<dbReference type="PDB" id="6DNC">
    <property type="method" value="EM"/>
    <property type="resolution" value="3.70 A"/>
    <property type="chains" value="T=1-115"/>
</dbReference>
<dbReference type="PDB" id="6ENF">
    <property type="method" value="EM"/>
    <property type="resolution" value="3.20 A"/>
    <property type="chains" value="P=2-115"/>
</dbReference>
<dbReference type="PDB" id="6ENJ">
    <property type="method" value="EM"/>
    <property type="resolution" value="3.70 A"/>
    <property type="chains" value="P=2-115"/>
</dbReference>
<dbReference type="PDB" id="6ENU">
    <property type="method" value="EM"/>
    <property type="resolution" value="3.10 A"/>
    <property type="chains" value="P=2-115"/>
</dbReference>
<dbReference type="PDB" id="6GBZ">
    <property type="method" value="EM"/>
    <property type="resolution" value="3.80 A"/>
    <property type="chains" value="P=2-115"/>
</dbReference>
<dbReference type="PDB" id="6GC0">
    <property type="method" value="EM"/>
    <property type="resolution" value="3.80 A"/>
    <property type="chains" value="P=2-115"/>
</dbReference>
<dbReference type="PDB" id="6GC4">
    <property type="method" value="EM"/>
    <property type="resolution" value="4.30 A"/>
    <property type="chains" value="P=2-115"/>
</dbReference>
<dbReference type="PDB" id="6GC6">
    <property type="method" value="EM"/>
    <property type="resolution" value="4.30 A"/>
    <property type="chains" value="P=2-115"/>
</dbReference>
<dbReference type="PDB" id="6GC7">
    <property type="method" value="EM"/>
    <property type="resolution" value="4.30 A"/>
    <property type="chains" value="P=2-115"/>
</dbReference>
<dbReference type="PDB" id="6GC8">
    <property type="method" value="EM"/>
    <property type="resolution" value="3.80 A"/>
    <property type="chains" value="P=2-115"/>
</dbReference>
<dbReference type="PDB" id="6GWT">
    <property type="method" value="EM"/>
    <property type="resolution" value="3.80 A"/>
    <property type="chains" value="P=2-115"/>
</dbReference>
<dbReference type="PDB" id="6GXM">
    <property type="method" value="EM"/>
    <property type="resolution" value="3.80 A"/>
    <property type="chains" value="P=2-115"/>
</dbReference>
<dbReference type="PDB" id="6GXN">
    <property type="method" value="EM"/>
    <property type="resolution" value="3.90 A"/>
    <property type="chains" value="P=2-115"/>
</dbReference>
<dbReference type="PDB" id="6GXO">
    <property type="method" value="EM"/>
    <property type="resolution" value="3.90 A"/>
    <property type="chains" value="P=2-115"/>
</dbReference>
<dbReference type="PDB" id="6GXP">
    <property type="method" value="EM"/>
    <property type="resolution" value="4.40 A"/>
    <property type="chains" value="P=2-115"/>
</dbReference>
<dbReference type="PDB" id="6H4N">
    <property type="method" value="EM"/>
    <property type="resolution" value="3.00 A"/>
    <property type="chains" value="P=2-115"/>
</dbReference>
<dbReference type="PDB" id="6H58">
    <property type="method" value="EM"/>
    <property type="resolution" value="7.90 A"/>
    <property type="chains" value="P/PP=2-115"/>
</dbReference>
<dbReference type="PDB" id="6HRM">
    <property type="method" value="EM"/>
    <property type="resolution" value="2.96 A"/>
    <property type="chains" value="P=2-115"/>
</dbReference>
<dbReference type="PDB" id="6I0Y">
    <property type="method" value="EM"/>
    <property type="resolution" value="3.20 A"/>
    <property type="chains" value="P=2-115"/>
</dbReference>
<dbReference type="PDB" id="6I7V">
    <property type="method" value="X-ray"/>
    <property type="resolution" value="2.90 A"/>
    <property type="chains" value="CQ/DQ=2-115"/>
</dbReference>
<dbReference type="PDB" id="6O9J">
    <property type="method" value="EM"/>
    <property type="resolution" value="3.90 A"/>
    <property type="chains" value="P=2-115"/>
</dbReference>
<dbReference type="PDB" id="6O9K">
    <property type="method" value="EM"/>
    <property type="resolution" value="4.00 A"/>
    <property type="chains" value="P=2-115"/>
</dbReference>
<dbReference type="PDB" id="6OFX">
    <property type="method" value="EM"/>
    <property type="resolution" value="3.30 A"/>
    <property type="chains" value="p=2-115"/>
</dbReference>
<dbReference type="PDB" id="6OG7">
    <property type="method" value="EM"/>
    <property type="resolution" value="3.30 A"/>
    <property type="chains" value="p=2-115"/>
</dbReference>
<dbReference type="PDB" id="6OGF">
    <property type="method" value="EM"/>
    <property type="resolution" value="3.90 A"/>
    <property type="chains" value="p=1-115"/>
</dbReference>
<dbReference type="PDB" id="6OGG">
    <property type="method" value="EM"/>
    <property type="resolution" value="4.20 A"/>
    <property type="chains" value="p=1-115"/>
</dbReference>
<dbReference type="PDB" id="6OGI">
    <property type="method" value="EM"/>
    <property type="resolution" value="3.40 A"/>
    <property type="chains" value="p=1-115"/>
</dbReference>
<dbReference type="PDB" id="6OM6">
    <property type="method" value="EM"/>
    <property type="resolution" value="3.10 A"/>
    <property type="chains" value="P=1-115"/>
</dbReference>
<dbReference type="PDB" id="6ORE">
    <property type="method" value="EM"/>
    <property type="resolution" value="2.90 A"/>
    <property type="chains" value="P=2-115"/>
</dbReference>
<dbReference type="PDB" id="6ORL">
    <property type="method" value="EM"/>
    <property type="resolution" value="3.50 A"/>
    <property type="chains" value="P=2-115"/>
</dbReference>
<dbReference type="PDB" id="6OSK">
    <property type="method" value="EM"/>
    <property type="resolution" value="3.60 A"/>
    <property type="chains" value="P=2-115"/>
</dbReference>
<dbReference type="PDB" id="6OSQ">
    <property type="method" value="EM"/>
    <property type="resolution" value="3.50 A"/>
    <property type="chains" value="P=2-115"/>
</dbReference>
<dbReference type="PDB" id="6OST">
    <property type="method" value="EM"/>
    <property type="resolution" value="4.20 A"/>
    <property type="chains" value="P=2-115"/>
</dbReference>
<dbReference type="PDB" id="6OT3">
    <property type="method" value="EM"/>
    <property type="resolution" value="3.90 A"/>
    <property type="chains" value="P=2-115"/>
</dbReference>
<dbReference type="PDB" id="6OUO">
    <property type="method" value="EM"/>
    <property type="resolution" value="3.70 A"/>
    <property type="chains" value="P=2-115"/>
</dbReference>
<dbReference type="PDB" id="6PJ6">
    <property type="method" value="EM"/>
    <property type="resolution" value="2.20 A"/>
    <property type="chains" value="X=2-115"/>
</dbReference>
<dbReference type="PDB" id="6Q97">
    <property type="method" value="EM"/>
    <property type="resolution" value="3.90 A"/>
    <property type="chains" value="P=2-115"/>
</dbReference>
<dbReference type="PDB" id="6Q98">
    <property type="method" value="EM"/>
    <property type="resolution" value="4.30 A"/>
    <property type="chains" value="P=1-115"/>
</dbReference>
<dbReference type="PDB" id="6Q9A">
    <property type="method" value="EM"/>
    <property type="resolution" value="3.70 A"/>
    <property type="chains" value="P=2-114"/>
</dbReference>
<dbReference type="PDB" id="6QDW">
    <property type="method" value="EM"/>
    <property type="resolution" value="2.83 A"/>
    <property type="chains" value="p=1-115"/>
</dbReference>
<dbReference type="PDB" id="6QUL">
    <property type="method" value="EM"/>
    <property type="resolution" value="3.00 A"/>
    <property type="chains" value="Q=1-115"/>
</dbReference>
<dbReference type="PDB" id="6S0K">
    <property type="method" value="EM"/>
    <property type="resolution" value="3.10 A"/>
    <property type="chains" value="Q=1-115"/>
</dbReference>
<dbReference type="PDB" id="6SZS">
    <property type="method" value="EM"/>
    <property type="resolution" value="3.06 A"/>
    <property type="chains" value="P=1-115"/>
</dbReference>
<dbReference type="PDB" id="6TBV">
    <property type="method" value="EM"/>
    <property type="resolution" value="2.70 A"/>
    <property type="chains" value="L191=1-115"/>
</dbReference>
<dbReference type="PDB" id="6TC3">
    <property type="method" value="EM"/>
    <property type="resolution" value="2.70 A"/>
    <property type="chains" value="L191=1-115"/>
</dbReference>
<dbReference type="PDB" id="6U48">
    <property type="method" value="EM"/>
    <property type="resolution" value="2.87 A"/>
    <property type="chains" value="CQ=2-115"/>
</dbReference>
<dbReference type="PDB" id="6VU3">
    <property type="method" value="EM"/>
    <property type="resolution" value="3.70 A"/>
    <property type="chains" value="y=2-115"/>
</dbReference>
<dbReference type="PDB" id="6VWL">
    <property type="method" value="EM"/>
    <property type="resolution" value="3.10 A"/>
    <property type="chains" value="N=1-115"/>
</dbReference>
<dbReference type="PDB" id="6VWM">
    <property type="method" value="EM"/>
    <property type="resolution" value="3.40 A"/>
    <property type="chains" value="N=1-115"/>
</dbReference>
<dbReference type="PDB" id="6VWN">
    <property type="method" value="EM"/>
    <property type="resolution" value="3.40 A"/>
    <property type="chains" value="N=1-115"/>
</dbReference>
<dbReference type="PDB" id="6VYQ">
    <property type="method" value="EM"/>
    <property type="resolution" value="3.70 A"/>
    <property type="chains" value="y=1-115"/>
</dbReference>
<dbReference type="PDB" id="6VYR">
    <property type="method" value="EM"/>
    <property type="resolution" value="3.80 A"/>
    <property type="chains" value="y=1-115"/>
</dbReference>
<dbReference type="PDB" id="6VYS">
    <property type="method" value="EM"/>
    <property type="resolution" value="3.70 A"/>
    <property type="chains" value="y=1-115"/>
</dbReference>
<dbReference type="PDB" id="6VYT">
    <property type="method" value="EM"/>
    <property type="resolution" value="14.00 A"/>
    <property type="chains" value="y=1-115"/>
</dbReference>
<dbReference type="PDB" id="6VYU">
    <property type="method" value="EM"/>
    <property type="resolution" value="7.00 A"/>
    <property type="chains" value="y=1-115"/>
</dbReference>
<dbReference type="PDB" id="6VYW">
    <property type="method" value="EM"/>
    <property type="resolution" value="7.00 A"/>
    <property type="chains" value="y=1-115"/>
</dbReference>
<dbReference type="PDB" id="6VYX">
    <property type="method" value="EM"/>
    <property type="resolution" value="9.90 A"/>
    <property type="chains" value="y=1-115"/>
</dbReference>
<dbReference type="PDB" id="6VYY">
    <property type="method" value="EM"/>
    <property type="resolution" value="9.90 A"/>
    <property type="chains" value="y=1-115"/>
</dbReference>
<dbReference type="PDB" id="6VYZ">
    <property type="method" value="EM"/>
    <property type="resolution" value="9.90 A"/>
    <property type="chains" value="y=1-115"/>
</dbReference>
<dbReference type="PDB" id="6VZ2">
    <property type="method" value="EM"/>
    <property type="resolution" value="10.00 A"/>
    <property type="chains" value="y=1-115"/>
</dbReference>
<dbReference type="PDB" id="6VZ3">
    <property type="method" value="EM"/>
    <property type="resolution" value="8.90 A"/>
    <property type="chains" value="y=2-115"/>
</dbReference>
<dbReference type="PDB" id="6VZ5">
    <property type="method" value="EM"/>
    <property type="resolution" value="8.90 A"/>
    <property type="chains" value="y=1-115"/>
</dbReference>
<dbReference type="PDB" id="6VZ7">
    <property type="method" value="EM"/>
    <property type="resolution" value="7.00 A"/>
    <property type="chains" value="y=2-115"/>
</dbReference>
<dbReference type="PDB" id="6VZJ">
    <property type="method" value="EM"/>
    <property type="resolution" value="4.10 A"/>
    <property type="chains" value="y=2-115"/>
</dbReference>
<dbReference type="PDB" id="6WD0">
    <property type="method" value="EM"/>
    <property type="resolution" value="3.00 A"/>
    <property type="chains" value="p=2-115"/>
</dbReference>
<dbReference type="PDB" id="6WD1">
    <property type="method" value="EM"/>
    <property type="resolution" value="3.30 A"/>
    <property type="chains" value="p=2-115"/>
</dbReference>
<dbReference type="PDB" id="6WD2">
    <property type="method" value="EM"/>
    <property type="resolution" value="3.60 A"/>
    <property type="chains" value="p=2-115"/>
</dbReference>
<dbReference type="PDB" id="6WD3">
    <property type="method" value="EM"/>
    <property type="resolution" value="3.60 A"/>
    <property type="chains" value="p=2-115"/>
</dbReference>
<dbReference type="PDB" id="6WD4">
    <property type="method" value="EM"/>
    <property type="resolution" value="3.70 A"/>
    <property type="chains" value="p=2-115"/>
</dbReference>
<dbReference type="PDB" id="6WD5">
    <property type="method" value="EM"/>
    <property type="resolution" value="3.60 A"/>
    <property type="chains" value="p=2-115"/>
</dbReference>
<dbReference type="PDB" id="6WD6">
    <property type="method" value="EM"/>
    <property type="resolution" value="3.70 A"/>
    <property type="chains" value="p=2-115"/>
</dbReference>
<dbReference type="PDB" id="6WD7">
    <property type="method" value="EM"/>
    <property type="resolution" value="3.90 A"/>
    <property type="chains" value="p=2-115"/>
</dbReference>
<dbReference type="PDB" id="6WD8">
    <property type="method" value="EM"/>
    <property type="resolution" value="3.70 A"/>
    <property type="chains" value="p=2-115"/>
</dbReference>
<dbReference type="PDB" id="6WD9">
    <property type="method" value="EM"/>
    <property type="resolution" value="3.70 A"/>
    <property type="chains" value="p=2-115"/>
</dbReference>
<dbReference type="PDB" id="6WDA">
    <property type="method" value="EM"/>
    <property type="resolution" value="3.80 A"/>
    <property type="chains" value="p=2-115"/>
</dbReference>
<dbReference type="PDB" id="6WDB">
    <property type="method" value="EM"/>
    <property type="resolution" value="4.00 A"/>
    <property type="chains" value="p=2-115"/>
</dbReference>
<dbReference type="PDB" id="6WDC">
    <property type="method" value="EM"/>
    <property type="resolution" value="4.20 A"/>
    <property type="chains" value="p=2-115"/>
</dbReference>
<dbReference type="PDB" id="6WDD">
    <property type="method" value="EM"/>
    <property type="resolution" value="3.20 A"/>
    <property type="chains" value="p=2-115"/>
</dbReference>
<dbReference type="PDB" id="6WDE">
    <property type="method" value="EM"/>
    <property type="resolution" value="3.00 A"/>
    <property type="chains" value="p=2-115"/>
</dbReference>
<dbReference type="PDB" id="6WDF">
    <property type="method" value="EM"/>
    <property type="resolution" value="3.30 A"/>
    <property type="chains" value="p=2-115"/>
</dbReference>
<dbReference type="PDB" id="6WDG">
    <property type="method" value="EM"/>
    <property type="resolution" value="3.30 A"/>
    <property type="chains" value="p=2-115"/>
</dbReference>
<dbReference type="PDB" id="6WDH">
    <property type="method" value="EM"/>
    <property type="resolution" value="4.30 A"/>
    <property type="chains" value="p=2-115"/>
</dbReference>
<dbReference type="PDB" id="6WDI">
    <property type="method" value="EM"/>
    <property type="resolution" value="4.00 A"/>
    <property type="chains" value="p=2-115"/>
</dbReference>
<dbReference type="PDB" id="6WDJ">
    <property type="method" value="EM"/>
    <property type="resolution" value="3.70 A"/>
    <property type="chains" value="p=2-115"/>
</dbReference>
<dbReference type="PDB" id="6WDK">
    <property type="method" value="EM"/>
    <property type="resolution" value="3.60 A"/>
    <property type="chains" value="p=2-115"/>
</dbReference>
<dbReference type="PDB" id="6WDL">
    <property type="method" value="EM"/>
    <property type="resolution" value="3.70 A"/>
    <property type="chains" value="p=2-115"/>
</dbReference>
<dbReference type="PDB" id="6WDM">
    <property type="method" value="EM"/>
    <property type="resolution" value="3.60 A"/>
    <property type="chains" value="p=2-115"/>
</dbReference>
<dbReference type="PDB" id="6WNT">
    <property type="method" value="EM"/>
    <property type="resolution" value="3.10 A"/>
    <property type="chains" value="p=2-115"/>
</dbReference>
<dbReference type="PDB" id="6WNV">
    <property type="method" value="EM"/>
    <property type="resolution" value="3.50 A"/>
    <property type="chains" value="p=2-115"/>
</dbReference>
<dbReference type="PDB" id="6WNW">
    <property type="method" value="EM"/>
    <property type="resolution" value="3.20 A"/>
    <property type="chains" value="p=2-115"/>
</dbReference>
<dbReference type="PDB" id="6X6T">
    <property type="method" value="EM"/>
    <property type="resolution" value="3.20 A"/>
    <property type="chains" value="y=1-115"/>
</dbReference>
<dbReference type="PDB" id="6X7F">
    <property type="method" value="EM"/>
    <property type="resolution" value="3.50 A"/>
    <property type="chains" value="y=1-115"/>
</dbReference>
<dbReference type="PDB" id="6X7K">
    <property type="method" value="EM"/>
    <property type="resolution" value="3.10 A"/>
    <property type="chains" value="y=1-115"/>
</dbReference>
<dbReference type="PDB" id="6X9Q">
    <property type="method" value="EM"/>
    <property type="resolution" value="4.80 A"/>
    <property type="chains" value="y=1-115"/>
</dbReference>
<dbReference type="PDB" id="6XDQ">
    <property type="method" value="EM"/>
    <property type="resolution" value="3.70 A"/>
    <property type="chains" value="y=1-115"/>
</dbReference>
<dbReference type="PDB" id="6XDR">
    <property type="method" value="EM"/>
    <property type="resolution" value="4.70 A"/>
    <property type="chains" value="y=1-115"/>
</dbReference>
<dbReference type="PDB" id="6XGF">
    <property type="method" value="EM"/>
    <property type="resolution" value="5.00 A"/>
    <property type="chains" value="y=1-115"/>
</dbReference>
<dbReference type="PDB" id="6XII">
    <property type="method" value="EM"/>
    <property type="resolution" value="7.00 A"/>
    <property type="chains" value="y=1-115"/>
</dbReference>
<dbReference type="PDB" id="6XIJ">
    <property type="method" value="EM"/>
    <property type="resolution" value="8.00 A"/>
    <property type="chains" value="y=1-115"/>
</dbReference>
<dbReference type="PDB" id="6XZ7">
    <property type="method" value="EM"/>
    <property type="resolution" value="2.10 A"/>
    <property type="chains" value="P=2-115"/>
</dbReference>
<dbReference type="PDB" id="6XZA">
    <property type="method" value="EM"/>
    <property type="resolution" value="2.66 A"/>
    <property type="chains" value="P2=2-115"/>
</dbReference>
<dbReference type="PDB" id="6XZB">
    <property type="method" value="EM"/>
    <property type="resolution" value="2.54 A"/>
    <property type="chains" value="P2=2-115"/>
</dbReference>
<dbReference type="PDB" id="6Y69">
    <property type="method" value="EM"/>
    <property type="resolution" value="2.86 A"/>
    <property type="chains" value="P=2-115"/>
</dbReference>
<dbReference type="PDB" id="6YS3">
    <property type="method" value="EM"/>
    <property type="resolution" value="2.58 A"/>
    <property type="chains" value="p=1-115"/>
</dbReference>
<dbReference type="PDB" id="6YSR">
    <property type="method" value="EM"/>
    <property type="resolution" value="3.10 A"/>
    <property type="chains" value="P=1-115"/>
</dbReference>
<dbReference type="PDB" id="6YSS">
    <property type="method" value="EM"/>
    <property type="resolution" value="2.60 A"/>
    <property type="chains" value="P=1-115"/>
</dbReference>
<dbReference type="PDB" id="6YST">
    <property type="method" value="EM"/>
    <property type="resolution" value="3.20 A"/>
    <property type="chains" value="P=1-115"/>
</dbReference>
<dbReference type="PDB" id="6YSU">
    <property type="method" value="EM"/>
    <property type="resolution" value="3.70 A"/>
    <property type="chains" value="P=1-115"/>
</dbReference>
<dbReference type="PDB" id="6ZTJ">
    <property type="method" value="EM"/>
    <property type="resolution" value="3.40 A"/>
    <property type="chains" value="BQ=1-115"/>
</dbReference>
<dbReference type="PDB" id="6ZTL">
    <property type="method" value="EM"/>
    <property type="resolution" value="3.50 A"/>
    <property type="chains" value="BQ=1-115"/>
</dbReference>
<dbReference type="PDB" id="6ZTM">
    <property type="method" value="EM"/>
    <property type="resolution" value="3.30 A"/>
    <property type="chains" value="BQ=1-115"/>
</dbReference>
<dbReference type="PDB" id="6ZTN">
    <property type="method" value="EM"/>
    <property type="resolution" value="3.90 A"/>
    <property type="chains" value="BQ=1-115"/>
</dbReference>
<dbReference type="PDB" id="6ZTO">
    <property type="method" value="EM"/>
    <property type="resolution" value="3.00 A"/>
    <property type="chains" value="BQ=1-115"/>
</dbReference>
<dbReference type="PDB" id="6ZTP">
    <property type="method" value="EM"/>
    <property type="resolution" value="3.00 A"/>
    <property type="chains" value="BQ=1-115"/>
</dbReference>
<dbReference type="PDB" id="6ZU1">
    <property type="method" value="EM"/>
    <property type="resolution" value="3.00 A"/>
    <property type="chains" value="BQ=1-115"/>
</dbReference>
<dbReference type="PDB" id="7ABZ">
    <property type="method" value="EM"/>
    <property type="resolution" value="3.21 A"/>
    <property type="chains" value="P=2-115"/>
</dbReference>
<dbReference type="PDB" id="7AC7">
    <property type="method" value="EM"/>
    <property type="resolution" value="3.08 A"/>
    <property type="chains" value="P=2-115"/>
</dbReference>
<dbReference type="PDB" id="7ACJ">
    <property type="method" value="EM"/>
    <property type="resolution" value="3.20 A"/>
    <property type="chains" value="P=2-115"/>
</dbReference>
<dbReference type="PDB" id="7ACR">
    <property type="method" value="EM"/>
    <property type="resolution" value="3.44 A"/>
    <property type="chains" value="P=2-115"/>
</dbReference>
<dbReference type="PDB" id="7B5K">
    <property type="method" value="EM"/>
    <property type="resolution" value="2.90 A"/>
    <property type="chains" value="P=2-115"/>
</dbReference>
<dbReference type="PDB" id="7BL2">
    <property type="method" value="EM"/>
    <property type="resolution" value="3.70 A"/>
    <property type="chains" value="P=1-115"/>
</dbReference>
<dbReference type="PDB" id="7BL3">
    <property type="method" value="EM"/>
    <property type="resolution" value="3.50 A"/>
    <property type="chains" value="P=1-115"/>
</dbReference>
<dbReference type="PDB" id="7BL4">
    <property type="method" value="EM"/>
    <property type="resolution" value="2.40 A"/>
    <property type="chains" value="P=1-115"/>
</dbReference>
<dbReference type="PDB" id="7BL5">
    <property type="method" value="EM"/>
    <property type="resolution" value="3.30 A"/>
    <property type="chains" value="P=1-115"/>
</dbReference>
<dbReference type="PDB" id="7BL6">
    <property type="method" value="EM"/>
    <property type="resolution" value="4.00 A"/>
    <property type="chains" value="P=1-115"/>
</dbReference>
<dbReference type="PDB" id="7BV8">
    <property type="method" value="EM"/>
    <property type="resolution" value="3.14 A"/>
    <property type="chains" value="Q=1-115"/>
</dbReference>
<dbReference type="PDB" id="7D6Z">
    <property type="method" value="EM"/>
    <property type="resolution" value="3.40 A"/>
    <property type="chains" value="P=1-115"/>
</dbReference>
<dbReference type="PDB" id="7D80">
    <property type="method" value="EM"/>
    <property type="resolution" value="4.10 A"/>
    <property type="chains" value="o=1-115"/>
</dbReference>
<dbReference type="PDB" id="7JSS">
    <property type="method" value="EM"/>
    <property type="resolution" value="3.70 A"/>
    <property type="chains" value="p=2-115"/>
</dbReference>
<dbReference type="PDB" id="7JSW">
    <property type="method" value="EM"/>
    <property type="resolution" value="3.80 A"/>
    <property type="chains" value="p=2-115"/>
</dbReference>
<dbReference type="PDB" id="7JSZ">
    <property type="method" value="EM"/>
    <property type="resolution" value="3.70 A"/>
    <property type="chains" value="p=2-115"/>
</dbReference>
<dbReference type="PDB" id="7JT1">
    <property type="method" value="EM"/>
    <property type="resolution" value="3.30 A"/>
    <property type="chains" value="p=2-115"/>
</dbReference>
<dbReference type="PDB" id="7JT2">
    <property type="method" value="EM"/>
    <property type="resolution" value="3.50 A"/>
    <property type="chains" value="p=2-115"/>
</dbReference>
<dbReference type="PDB" id="7JT3">
    <property type="method" value="EM"/>
    <property type="resolution" value="3.70 A"/>
    <property type="chains" value="p=2-115"/>
</dbReference>
<dbReference type="PDB" id="7K00">
    <property type="method" value="EM"/>
    <property type="resolution" value="1.98 A"/>
    <property type="chains" value="o=1-115"/>
</dbReference>
<dbReference type="PDB" id="7K50">
    <property type="method" value="EM"/>
    <property type="resolution" value="3.40 A"/>
    <property type="chains" value="p=2-115"/>
</dbReference>
<dbReference type="PDB" id="7K51">
    <property type="method" value="EM"/>
    <property type="resolution" value="3.50 A"/>
    <property type="chains" value="p=2-115"/>
</dbReference>
<dbReference type="PDB" id="7K52">
    <property type="method" value="EM"/>
    <property type="resolution" value="3.40 A"/>
    <property type="chains" value="p=2-115"/>
</dbReference>
<dbReference type="PDB" id="7K53">
    <property type="method" value="EM"/>
    <property type="resolution" value="3.20 A"/>
    <property type="chains" value="p=2-115"/>
</dbReference>
<dbReference type="PDB" id="7K54">
    <property type="method" value="EM"/>
    <property type="resolution" value="3.20 A"/>
    <property type="chains" value="p=2-115"/>
</dbReference>
<dbReference type="PDB" id="7K55">
    <property type="method" value="EM"/>
    <property type="resolution" value="3.30 A"/>
    <property type="chains" value="p=2-115"/>
</dbReference>
<dbReference type="PDB" id="7LV0">
    <property type="method" value="EM"/>
    <property type="resolution" value="3.20 A"/>
    <property type="chains" value="p=2-115"/>
</dbReference>
<dbReference type="PDB" id="7LVK">
    <property type="method" value="EM"/>
    <property type="resolution" value="2.20 A"/>
    <property type="chains" value="X=1-115"/>
</dbReference>
<dbReference type="PDB" id="7M5D">
    <property type="method" value="EM"/>
    <property type="resolution" value="2.80 A"/>
    <property type="chains" value="P=2-115"/>
</dbReference>
<dbReference type="PDB" id="7N1P">
    <property type="method" value="EM"/>
    <property type="resolution" value="2.33 A"/>
    <property type="chains" value="LS=1-115"/>
</dbReference>
<dbReference type="PDB" id="7N2C">
    <property type="method" value="EM"/>
    <property type="resolution" value="2.72 A"/>
    <property type="chains" value="LS=1-115"/>
</dbReference>
<dbReference type="PDB" id="7N2U">
    <property type="method" value="EM"/>
    <property type="resolution" value="2.53 A"/>
    <property type="chains" value="LS=1-115"/>
</dbReference>
<dbReference type="PDB" id="7N2V">
    <property type="method" value="EM"/>
    <property type="resolution" value="2.54 A"/>
    <property type="chains" value="LS=1-115"/>
</dbReference>
<dbReference type="PDB" id="7N30">
    <property type="method" value="EM"/>
    <property type="resolution" value="2.66 A"/>
    <property type="chains" value="LS=1-115"/>
</dbReference>
<dbReference type="PDB" id="7N31">
    <property type="method" value="EM"/>
    <property type="resolution" value="2.69 A"/>
    <property type="chains" value="LS=1-115"/>
</dbReference>
<dbReference type="PDB" id="7NBU">
    <property type="method" value="EM"/>
    <property type="resolution" value="3.11 A"/>
    <property type="chains" value="o=2-115"/>
</dbReference>
<dbReference type="PDB" id="7NWT">
    <property type="method" value="EM"/>
    <property type="resolution" value="2.66 A"/>
    <property type="chains" value="P=1-115"/>
</dbReference>
<dbReference type="PDB" id="7O19">
    <property type="method" value="EM"/>
    <property type="resolution" value="2.90 A"/>
    <property type="chains" value="BP=1-115"/>
</dbReference>
<dbReference type="PDB" id="7O1A">
    <property type="method" value="EM"/>
    <property type="resolution" value="2.40 A"/>
    <property type="chains" value="BP=1-115"/>
</dbReference>
<dbReference type="PDB" id="7O1C">
    <property type="method" value="EM"/>
    <property type="resolution" value="2.60 A"/>
    <property type="chains" value="BP=1-115"/>
</dbReference>
<dbReference type="PDB" id="7ODE">
    <property type="method" value="EM"/>
    <property type="resolution" value="2.84 A"/>
    <property type="chains" value="X=1-115"/>
</dbReference>
<dbReference type="PDB" id="7OIZ">
    <property type="method" value="EM"/>
    <property type="resolution" value="2.90 A"/>
    <property type="chains" value="o=1-115"/>
</dbReference>
<dbReference type="PDB" id="7OJ0">
    <property type="method" value="EM"/>
    <property type="resolution" value="3.50 A"/>
    <property type="chains" value="o=1-115"/>
</dbReference>
<dbReference type="PDB" id="7P3K">
    <property type="method" value="EM"/>
    <property type="resolution" value="2.90 A"/>
    <property type="chains" value="o=1-115"/>
</dbReference>
<dbReference type="PDB" id="7PJS">
    <property type="method" value="EM"/>
    <property type="resolution" value="2.35 A"/>
    <property type="chains" value="P=1-115"/>
</dbReference>
<dbReference type="PDB" id="7PJT">
    <property type="method" value="EM"/>
    <property type="resolution" value="6.00 A"/>
    <property type="chains" value="P=1-115"/>
</dbReference>
<dbReference type="PDB" id="7PJU">
    <property type="method" value="EM"/>
    <property type="resolution" value="9.50 A"/>
    <property type="chains" value="P=1-115"/>
</dbReference>
<dbReference type="PDB" id="7PJV">
    <property type="method" value="EM"/>
    <property type="resolution" value="3.10 A"/>
    <property type="chains" value="P=1-115"/>
</dbReference>
<dbReference type="PDB" id="7PJW">
    <property type="method" value="EM"/>
    <property type="resolution" value="4.00 A"/>
    <property type="chains" value="P=1-115"/>
</dbReference>
<dbReference type="PDB" id="7PJX">
    <property type="method" value="EM"/>
    <property type="resolution" value="6.50 A"/>
    <property type="chains" value="P=1-115"/>
</dbReference>
<dbReference type="PDB" id="7PJY">
    <property type="method" value="EM"/>
    <property type="resolution" value="3.10 A"/>
    <property type="chains" value="P=1-115"/>
</dbReference>
<dbReference type="PDB" id="7PJZ">
    <property type="method" value="EM"/>
    <property type="resolution" value="6.00 A"/>
    <property type="chains" value="P=1-115"/>
</dbReference>
<dbReference type="PDB" id="7Q4K">
    <property type="method" value="EM"/>
    <property type="resolution" value="3.00 A"/>
    <property type="chains" value="BP=1-115"/>
</dbReference>
<dbReference type="PDB" id="7QG8">
    <property type="method" value="EM"/>
    <property type="resolution" value="3.97 A"/>
    <property type="chains" value="c=1-115"/>
</dbReference>
<dbReference type="PDB" id="7QGH">
    <property type="method" value="EM"/>
    <property type="resolution" value="4.48 A"/>
    <property type="chains" value="c=1-115"/>
</dbReference>
<dbReference type="PDB" id="7QGN">
    <property type="method" value="EM"/>
    <property type="resolution" value="3.37 A"/>
    <property type="chains" value="c=1-115"/>
</dbReference>
<dbReference type="PDB" id="7QGR">
    <property type="method" value="EM"/>
    <property type="resolution" value="5.70 A"/>
    <property type="chains" value="c=1-115"/>
</dbReference>
<dbReference type="PDB" id="7QQ3">
    <property type="method" value="EM"/>
    <property type="resolution" value="2.10 A"/>
    <property type="chains" value="X=1-115"/>
</dbReference>
<dbReference type="PDB" id="7S1G">
    <property type="method" value="EM"/>
    <property type="resolution" value="2.48 A"/>
    <property type="chains" value="X=1-115"/>
</dbReference>
<dbReference type="PDB" id="7S1H">
    <property type="method" value="EM"/>
    <property type="resolution" value="2.35 A"/>
    <property type="chains" value="X=1-115"/>
</dbReference>
<dbReference type="PDB" id="7S1I">
    <property type="method" value="EM"/>
    <property type="resolution" value="2.48 A"/>
    <property type="chains" value="X=1-115"/>
</dbReference>
<dbReference type="PDB" id="7S1J">
    <property type="method" value="EM"/>
    <property type="resolution" value="2.47 A"/>
    <property type="chains" value="X=1-115"/>
</dbReference>
<dbReference type="PDB" id="7S1K">
    <property type="method" value="EM"/>
    <property type="resolution" value="2.42 A"/>
    <property type="chains" value="X=1-115"/>
</dbReference>
<dbReference type="PDB" id="7SA4">
    <property type="method" value="EM"/>
    <property type="resolution" value="2.55 A"/>
    <property type="chains" value="P=1-115"/>
</dbReference>
<dbReference type="PDB" id="7SS9">
    <property type="method" value="EM"/>
    <property type="resolution" value="3.90 A"/>
    <property type="chains" value="p=2-115"/>
</dbReference>
<dbReference type="PDB" id="7SSD">
    <property type="method" value="EM"/>
    <property type="resolution" value="3.30 A"/>
    <property type="chains" value="p=2-115"/>
</dbReference>
<dbReference type="PDB" id="7SSL">
    <property type="method" value="EM"/>
    <property type="resolution" value="3.80 A"/>
    <property type="chains" value="p=2-115"/>
</dbReference>
<dbReference type="PDB" id="7SSN">
    <property type="method" value="EM"/>
    <property type="resolution" value="3.20 A"/>
    <property type="chains" value="p=2-115"/>
</dbReference>
<dbReference type="PDB" id="7SSO">
    <property type="method" value="EM"/>
    <property type="resolution" value="3.20 A"/>
    <property type="chains" value="p=2-115"/>
</dbReference>
<dbReference type="PDB" id="7SSW">
    <property type="method" value="EM"/>
    <property type="resolution" value="3.80 A"/>
    <property type="chains" value="p=2-115"/>
</dbReference>
<dbReference type="PDB" id="7ST2">
    <property type="method" value="EM"/>
    <property type="resolution" value="2.90 A"/>
    <property type="chains" value="p=2-115"/>
</dbReference>
<dbReference type="PDB" id="7ST6">
    <property type="method" value="EM"/>
    <property type="resolution" value="3.00 A"/>
    <property type="chains" value="p=2-115"/>
</dbReference>
<dbReference type="PDB" id="7ST7">
    <property type="method" value="EM"/>
    <property type="resolution" value="3.20 A"/>
    <property type="chains" value="p=2-115"/>
</dbReference>
<dbReference type="PDB" id="7TOS">
    <property type="method" value="EM"/>
    <property type="resolution" value="2.90 A"/>
    <property type="chains" value="L19=2-115"/>
</dbReference>
<dbReference type="PDB" id="7UG7">
    <property type="method" value="EM"/>
    <property type="resolution" value="2.58 A"/>
    <property type="chains" value="LS=1-115"/>
</dbReference>
<dbReference type="PDB" id="7UPH">
    <property type="method" value="EM"/>
    <property type="resolution" value="4.18 A"/>
    <property type="chains" value="o=2-115"/>
</dbReference>
<dbReference type="PDB" id="7Y7C">
    <property type="method" value="EM"/>
    <property type="resolution" value="2.51 A"/>
    <property type="chains" value="o=1-115"/>
</dbReference>
<dbReference type="PDB" id="7Y7D">
    <property type="method" value="EM"/>
    <property type="resolution" value="2.58 A"/>
    <property type="chains" value="o=1-115"/>
</dbReference>
<dbReference type="PDB" id="7Y7E">
    <property type="method" value="EM"/>
    <property type="resolution" value="2.41 A"/>
    <property type="chains" value="o=1-115"/>
</dbReference>
<dbReference type="PDB" id="7Y7F">
    <property type="method" value="EM"/>
    <property type="resolution" value="2.43 A"/>
    <property type="chains" value="o=1-115"/>
</dbReference>
<dbReference type="PDB" id="7Y7G">
    <property type="method" value="EM"/>
    <property type="resolution" value="2.34 A"/>
    <property type="chains" value="o=1-115"/>
</dbReference>
<dbReference type="PDB" id="7Y7H">
    <property type="method" value="EM"/>
    <property type="resolution" value="2.51 A"/>
    <property type="chains" value="o=1-115"/>
</dbReference>
<dbReference type="PDB" id="7YLA">
    <property type="method" value="EM"/>
    <property type="resolution" value="2.52 A"/>
    <property type="chains" value="X=2-115"/>
</dbReference>
<dbReference type="PDB" id="7Z20">
    <property type="method" value="EM"/>
    <property type="resolution" value="2.29 A"/>
    <property type="chains" value="p=1-115"/>
</dbReference>
<dbReference type="PDB" id="7ZOD">
    <property type="method" value="EM"/>
    <property type="resolution" value="2.56 A"/>
    <property type="chains" value="p=1-115"/>
</dbReference>
<dbReference type="PDB" id="7ZP8">
    <property type="method" value="EM"/>
    <property type="resolution" value="2.20 A"/>
    <property type="chains" value="p=1-115"/>
</dbReference>
<dbReference type="PDB" id="7ZQ5">
    <property type="method" value="EM"/>
    <property type="resolution" value="2.70 A"/>
    <property type="chains" value="p=1-115"/>
</dbReference>
<dbReference type="PDB" id="7ZQ6">
    <property type="method" value="EM"/>
    <property type="resolution" value="2.75 A"/>
    <property type="chains" value="p=1-115"/>
</dbReference>
<dbReference type="PDB" id="7ZTA">
    <property type="method" value="EM"/>
    <property type="resolution" value="2.70 A"/>
    <property type="chains" value="L191=2-115"/>
</dbReference>
<dbReference type="PDB" id="8A3L">
    <property type="method" value="EM"/>
    <property type="resolution" value="3.42 A"/>
    <property type="chains" value="o=1-115"/>
</dbReference>
<dbReference type="PDB" id="8AKN">
    <property type="method" value="EM"/>
    <property type="resolution" value="2.30 A"/>
    <property type="chains" value="o=1-115"/>
</dbReference>
<dbReference type="PDB" id="8AM9">
    <property type="method" value="EM"/>
    <property type="resolution" value="2.80 A"/>
    <property type="chains" value="o=1-115"/>
</dbReference>
<dbReference type="PDB" id="8ANA">
    <property type="method" value="EM"/>
    <property type="resolution" value="2.10 A"/>
    <property type="chains" value="o=1-115"/>
</dbReference>
<dbReference type="PDB" id="8AP4">
    <property type="method" value="EM"/>
    <property type="resolution" value="3.00 A"/>
    <property type="chains" value="o=1-115"/>
</dbReference>
<dbReference type="PDB" id="8AYE">
    <property type="method" value="EM"/>
    <property type="resolution" value="1.96 A"/>
    <property type="chains" value="o=1-115"/>
</dbReference>
<dbReference type="PDB" id="8B0X">
    <property type="method" value="EM"/>
    <property type="resolution" value="1.55 A"/>
    <property type="chains" value="o=1-115"/>
</dbReference>
<dbReference type="PDB" id="8B7Y">
    <property type="method" value="EM"/>
    <property type="resolution" value="3.00 A"/>
    <property type="chains" value="X=1-115"/>
</dbReference>
<dbReference type="PDB" id="8BF7">
    <property type="method" value="EM"/>
    <property type="resolution" value="2.33 A"/>
    <property type="chains" value="M=1-115"/>
</dbReference>
<dbReference type="PDB" id="8BGE">
    <property type="method" value="EM"/>
    <property type="resolution" value="2.11 A"/>
    <property type="chains" value="M=1-115"/>
</dbReference>
<dbReference type="PDB" id="8BGH">
    <property type="method" value="EM"/>
    <property type="resolution" value="2.88 A"/>
    <property type="chains" value="M=1-115"/>
</dbReference>
<dbReference type="PDB" id="8BH4">
    <property type="method" value="EM"/>
    <property type="resolution" value="2.62 A"/>
    <property type="chains" value="M=1-115"/>
</dbReference>
<dbReference type="PDB" id="8BHJ">
    <property type="method" value="EM"/>
    <property type="resolution" value="2.81 A"/>
    <property type="chains" value="M=1-115"/>
</dbReference>
<dbReference type="PDB" id="8BHL">
    <property type="method" value="EM"/>
    <property type="resolution" value="2.21 A"/>
    <property type="chains" value="M=1-115"/>
</dbReference>
<dbReference type="PDB" id="8BHN">
    <property type="method" value="EM"/>
    <property type="resolution" value="2.85 A"/>
    <property type="chains" value="M=1-115"/>
</dbReference>
<dbReference type="PDB" id="8BHP">
    <property type="method" value="EM"/>
    <property type="resolution" value="2.37 A"/>
    <property type="chains" value="M=1-115"/>
</dbReference>
<dbReference type="PDB" id="8BIL">
    <property type="method" value="EM"/>
    <property type="resolution" value="2.04 A"/>
    <property type="chains" value="M=1-115"/>
</dbReference>
<dbReference type="PDB" id="8BIM">
    <property type="method" value="EM"/>
    <property type="resolution" value="2.04 A"/>
    <property type="chains" value="M=1-115"/>
</dbReference>
<dbReference type="PDB" id="8C8X">
    <property type="method" value="EM"/>
    <property type="resolution" value="3.93 A"/>
    <property type="chains" value="P=1-115"/>
</dbReference>
<dbReference type="PDB" id="8C8Y">
    <property type="method" value="EM"/>
    <property type="resolution" value="3.03 A"/>
    <property type="chains" value="P=1-115"/>
</dbReference>
<dbReference type="PDB" id="8C8Z">
    <property type="method" value="EM"/>
    <property type="resolution" value="3.12 A"/>
    <property type="chains" value="P=1-115"/>
</dbReference>
<dbReference type="PDB" id="8C90">
    <property type="method" value="EM"/>
    <property type="resolution" value="3.15 A"/>
    <property type="chains" value="P=1-115"/>
</dbReference>
<dbReference type="PDB" id="8C91">
    <property type="method" value="EM"/>
    <property type="resolution" value="4.19 A"/>
    <property type="chains" value="P=1-115"/>
</dbReference>
<dbReference type="PDB" id="8C92">
    <property type="method" value="EM"/>
    <property type="resolution" value="3.79 A"/>
    <property type="chains" value="P=1-115"/>
</dbReference>
<dbReference type="PDB" id="8C93">
    <property type="method" value="EM"/>
    <property type="resolution" value="4.17 A"/>
    <property type="chains" value="P=1-115"/>
</dbReference>
<dbReference type="PDB" id="8C94">
    <property type="method" value="EM"/>
    <property type="resolution" value="3.80 A"/>
    <property type="chains" value="P=1-115"/>
</dbReference>
<dbReference type="PDB" id="8C96">
    <property type="method" value="EM"/>
    <property type="resolution" value="4.43 A"/>
    <property type="chains" value="P=1-115"/>
</dbReference>
<dbReference type="PDB" id="8C97">
    <property type="method" value="EM"/>
    <property type="resolution" value="4.07 A"/>
    <property type="chains" value="P=1-115"/>
</dbReference>
<dbReference type="PDB" id="8CAM">
    <property type="method" value="EM"/>
    <property type="resolution" value="1.86 A"/>
    <property type="chains" value="o=1-115"/>
</dbReference>
<dbReference type="PDB" id="8CEU">
    <property type="method" value="EM"/>
    <property type="resolution" value="1.83 A"/>
    <property type="chains" value="o=1-115"/>
</dbReference>
<dbReference type="PDB" id="8CGD">
    <property type="method" value="EM"/>
    <property type="resolution" value="1.98 A"/>
    <property type="chains" value="o=1-115"/>
</dbReference>
<dbReference type="PDB" id="8CGK">
    <property type="method" value="EM"/>
    <property type="resolution" value="1.64 A"/>
    <property type="chains" value="o=1-115"/>
</dbReference>
<dbReference type="PDB" id="8CGV">
    <property type="method" value="EM"/>
    <property type="resolution" value="1.66 A"/>
    <property type="chains" value="o=1-115"/>
</dbReference>
<dbReference type="PDB" id="8EIU">
    <property type="method" value="EM"/>
    <property type="resolution" value="2.24 A"/>
    <property type="chains" value="o=1-115"/>
</dbReference>
<dbReference type="PDB" id="8EKC">
    <property type="method" value="EM"/>
    <property type="resolution" value="2.70 A"/>
    <property type="chains" value="R=1-115"/>
</dbReference>
<dbReference type="PDB" id="8EMM">
    <property type="method" value="EM"/>
    <property type="resolution" value="2.10 A"/>
    <property type="chains" value="o=1-115"/>
</dbReference>
<dbReference type="PDB" id="8FIZ">
    <property type="method" value="EM"/>
    <property type="resolution" value="3.80 A"/>
    <property type="chains" value="BW=1-115"/>
</dbReference>
<dbReference type="PDB" id="8FTO">
    <property type="method" value="EM"/>
    <property type="resolution" value="1.85 A"/>
    <property type="chains" value="o=1-115"/>
</dbReference>
<dbReference type="PDB" id="8FZD">
    <property type="method" value="EM"/>
    <property type="resolution" value="3.10 A"/>
    <property type="chains" value="R=1-115"/>
</dbReference>
<dbReference type="PDB" id="8FZE">
    <property type="method" value="EM"/>
    <property type="resolution" value="3.00 A"/>
    <property type="chains" value="R=1-115"/>
</dbReference>
<dbReference type="PDB" id="8FZF">
    <property type="method" value="EM"/>
    <property type="resolution" value="3.20 A"/>
    <property type="chains" value="R=1-115"/>
</dbReference>
<dbReference type="PDB" id="8FZG">
    <property type="method" value="EM"/>
    <property type="resolution" value="3.10 A"/>
    <property type="chains" value="R=1-115"/>
</dbReference>
<dbReference type="PDB" id="8FZH">
    <property type="method" value="EM"/>
    <property type="resolution" value="2.90 A"/>
    <property type="chains" value="R=1-115"/>
</dbReference>
<dbReference type="PDB" id="8FZI">
    <property type="method" value="EM"/>
    <property type="resolution" value="3.10 A"/>
    <property type="chains" value="R=1-115"/>
</dbReference>
<dbReference type="PDB" id="8FZJ">
    <property type="method" value="EM"/>
    <property type="resolution" value="3.00 A"/>
    <property type="chains" value="R=1-115"/>
</dbReference>
<dbReference type="PDB" id="8G2U">
    <property type="method" value="EM"/>
    <property type="resolution" value="3.00 A"/>
    <property type="chains" value="P=2-115"/>
</dbReference>
<dbReference type="PDB" id="8G31">
    <property type="method" value="EM"/>
    <property type="resolution" value="3.20 A"/>
    <property type="chains" value="P=2-115"/>
</dbReference>
<dbReference type="PDB" id="8G34">
    <property type="method" value="EM"/>
    <property type="resolution" value="3.20 A"/>
    <property type="chains" value="P=2-115"/>
</dbReference>
<dbReference type="PDB" id="8G38">
    <property type="method" value="EM"/>
    <property type="resolution" value="3.20 A"/>
    <property type="chains" value="P=2-115"/>
</dbReference>
<dbReference type="PDB" id="8G6W">
    <property type="method" value="EM"/>
    <property type="resolution" value="2.02 A"/>
    <property type="chains" value="o=1-115"/>
</dbReference>
<dbReference type="PDB" id="8G6X">
    <property type="method" value="EM"/>
    <property type="resolution" value="2.31 A"/>
    <property type="chains" value="o=1-115"/>
</dbReference>
<dbReference type="PDB" id="8G6Y">
    <property type="method" value="EM"/>
    <property type="resolution" value="2.09 A"/>
    <property type="chains" value="o=1-115"/>
</dbReference>
<dbReference type="PDB" id="8G7P">
    <property type="method" value="EM"/>
    <property type="resolution" value="2.90 A"/>
    <property type="chains" value="R=1-115"/>
</dbReference>
<dbReference type="PDB" id="8G7Q">
    <property type="method" value="EM"/>
    <property type="resolution" value="3.10 A"/>
    <property type="chains" value="R=1-115"/>
</dbReference>
<dbReference type="PDB" id="8G7R">
    <property type="method" value="EM"/>
    <property type="resolution" value="2.80 A"/>
    <property type="chains" value="R=1-115"/>
</dbReference>
<dbReference type="PDB" id="8G7S">
    <property type="method" value="EM"/>
    <property type="resolution" value="3.10 A"/>
    <property type="chains" value="R=1-115"/>
</dbReference>
<dbReference type="PDB" id="8HSP">
    <property type="method" value="EM"/>
    <property type="resolution" value="2.32 A"/>
    <property type="chains" value="o=1-115"/>
</dbReference>
<dbReference type="PDB" id="8HTZ">
    <property type="method" value="EM"/>
    <property type="resolution" value="2.40 A"/>
    <property type="chains" value="o=1-115"/>
</dbReference>
<dbReference type="PDB" id="8HU1">
    <property type="method" value="EM"/>
    <property type="resolution" value="2.69 A"/>
    <property type="chains" value="o=1-115"/>
</dbReference>
<dbReference type="PDB" id="8IFB">
    <property type="method" value="EM"/>
    <property type="resolution" value="2.43 A"/>
    <property type="chains" value="o=1-115"/>
</dbReference>
<dbReference type="PDB" id="8IFC">
    <property type="method" value="EM"/>
    <property type="resolution" value="2.90 A"/>
    <property type="chains" value="o=1-115"/>
</dbReference>
<dbReference type="PDB" id="8J1Z">
    <property type="method" value="EM"/>
    <property type="resolution" value="2.60 A"/>
    <property type="chains" value="o=1-115"/>
</dbReference>
<dbReference type="PDB" id="8KIE">
    <property type="method" value="EM"/>
    <property type="resolution" value="2.50 A"/>
    <property type="chains" value="o=1-115"/>
</dbReference>
<dbReference type="PDB" id="8P16">
    <property type="method" value="EM"/>
    <property type="resolution" value="2.77 A"/>
    <property type="chains" value="P=1-115"/>
</dbReference>
<dbReference type="PDB" id="8P17">
    <property type="method" value="EM"/>
    <property type="resolution" value="2.78 A"/>
    <property type="chains" value="P=1-115"/>
</dbReference>
<dbReference type="PDB" id="8P18">
    <property type="method" value="EM"/>
    <property type="resolution" value="2.77 A"/>
    <property type="chains" value="P=1-115"/>
</dbReference>
<dbReference type="PDB" id="8PEG">
    <property type="method" value="EM"/>
    <property type="resolution" value="3.30 A"/>
    <property type="chains" value="s=1-115"/>
</dbReference>
<dbReference type="PDB" id="8PHJ">
    <property type="method" value="EM"/>
    <property type="resolution" value="3.67 A"/>
    <property type="chains" value="o=1-115"/>
</dbReference>
<dbReference type="PDB" id="8PKL">
    <property type="method" value="EM"/>
    <property type="resolution" value="3.09 A"/>
    <property type="chains" value="s=1-115"/>
</dbReference>
<dbReference type="PDB" id="8PVA">
    <property type="method" value="EM"/>
    <property type="resolution" value="4.50 A"/>
    <property type="chains" value="o=1-115"/>
</dbReference>
<dbReference type="PDB" id="8Q4F">
    <property type="method" value="EM"/>
    <property type="resolution" value="3.10 A"/>
    <property type="chains" value="o=1-115"/>
</dbReference>
<dbReference type="PDB" id="8QBT">
    <property type="method" value="EM"/>
    <property type="resolution" value="2.20 A"/>
    <property type="chains" value="P=1-115"/>
</dbReference>
<dbReference type="PDB" id="8QK7">
    <property type="method" value="EM"/>
    <property type="resolution" value="2.77 A"/>
    <property type="chains" value="P=1-115"/>
</dbReference>
<dbReference type="PDB" id="8QOA">
    <property type="method" value="EM"/>
    <property type="resolution" value="2.00 A"/>
    <property type="chains" value="o=1-115"/>
</dbReference>
<dbReference type="PDB" id="8R6C">
    <property type="method" value="EM"/>
    <property type="resolution" value="2.20 A"/>
    <property type="chains" value="o=1-115"/>
</dbReference>
<dbReference type="PDB" id="8R8M">
    <property type="method" value="EM"/>
    <property type="resolution" value="2.40 A"/>
    <property type="chains" value="o=1-115"/>
</dbReference>
<dbReference type="PDB" id="8RPY">
    <property type="method" value="EM"/>
    <property type="resolution" value="2.64 A"/>
    <property type="chains" value="P=2-115"/>
</dbReference>
<dbReference type="PDB" id="8RPZ">
    <property type="method" value="EM"/>
    <property type="resolution" value="2.44 A"/>
    <property type="chains" value="P=2-115"/>
</dbReference>
<dbReference type="PDB" id="8RQ0">
    <property type="method" value="EM"/>
    <property type="resolution" value="2.44 A"/>
    <property type="chains" value="P=2-115"/>
</dbReference>
<dbReference type="PDB" id="8RQ2">
    <property type="method" value="EM"/>
    <property type="resolution" value="2.44 A"/>
    <property type="chains" value="P=2-115"/>
</dbReference>
<dbReference type="PDB" id="8SYL">
    <property type="method" value="EM"/>
    <property type="resolution" value="2.90 A"/>
    <property type="chains" value="R=1-115"/>
</dbReference>
<dbReference type="PDB" id="8T5D">
    <property type="method" value="EM"/>
    <property type="resolution" value="3.20 A"/>
    <property type="chains" value="P=2-115"/>
</dbReference>
<dbReference type="PDB" id="8T5H">
    <property type="method" value="EM"/>
    <property type="resolution" value="3.30 A"/>
    <property type="chains" value="P=2-115"/>
</dbReference>
<dbReference type="PDB" id="8URY">
    <property type="method" value="EM"/>
    <property type="resolution" value="3.10 A"/>
    <property type="chains" value="y=1-115"/>
</dbReference>
<dbReference type="PDB" id="8VS9">
    <property type="method" value="EM"/>
    <property type="resolution" value="3.90 A"/>
    <property type="chains" value="L19=1-115"/>
</dbReference>
<dbReference type="PDB" id="8VSA">
    <property type="method" value="EM"/>
    <property type="resolution" value="3.70 A"/>
    <property type="chains" value="L19=1-115"/>
</dbReference>
<dbReference type="PDB" id="8W51">
    <property type="method" value="EM"/>
    <property type="resolution" value="2.40 A"/>
    <property type="chains" value="Q=1-115"/>
</dbReference>
<dbReference type="PDB" id="8YUO">
    <property type="method" value="EM"/>
    <property type="resolution" value="2.25 A"/>
    <property type="chains" value="o=1-115"/>
</dbReference>
<dbReference type="PDB" id="8YUP">
    <property type="method" value="EM"/>
    <property type="resolution" value="2.39 A"/>
    <property type="chains" value="o=1-115"/>
</dbReference>
<dbReference type="PDB" id="8YUQ">
    <property type="method" value="EM"/>
    <property type="resolution" value="2.41 A"/>
    <property type="chains" value="o=1-115"/>
</dbReference>
<dbReference type="PDB" id="8YUR">
    <property type="method" value="EM"/>
    <property type="resolution" value="2.47 A"/>
    <property type="chains" value="o=1-115"/>
</dbReference>
<dbReference type="PDB" id="8YUS">
    <property type="method" value="EM"/>
    <property type="resolution" value="2.43 A"/>
    <property type="chains" value="o=1-115"/>
</dbReference>
<dbReference type="PDB" id="9AX7">
    <property type="method" value="EM"/>
    <property type="resolution" value="2.63 A"/>
    <property type="chains" value="o=1-115"/>
</dbReference>
<dbReference type="PDB" id="9CG5">
    <property type="method" value="EM"/>
    <property type="resolution" value="2.59 A"/>
    <property type="chains" value="o=1-115"/>
</dbReference>
<dbReference type="PDB" id="9CG6">
    <property type="method" value="EM"/>
    <property type="resolution" value="2.61 A"/>
    <property type="chains" value="o=1-115"/>
</dbReference>
<dbReference type="PDB" id="9CG7">
    <property type="method" value="EM"/>
    <property type="resolution" value="2.75 A"/>
    <property type="chains" value="o=1-115"/>
</dbReference>
<dbReference type="PDB" id="9D89">
    <property type="method" value="EM"/>
    <property type="resolution" value="1.95 A"/>
    <property type="chains" value="o=2-115"/>
</dbReference>
<dbReference type="PDB" id="9DYG">
    <property type="method" value="EM"/>
    <property type="resolution" value="5.27 A"/>
    <property type="chains" value="P=3-115"/>
</dbReference>
<dbReference type="PDB" id="9FBV">
    <property type="method" value="EM"/>
    <property type="resolution" value="2.40 A"/>
    <property type="chains" value="o=1-115"/>
</dbReference>
<dbReference type="PDB" id="9GFT">
    <property type="method" value="EM"/>
    <property type="resolution" value="3.10 A"/>
    <property type="chains" value="Ak/c=1-115"/>
</dbReference>
<dbReference type="PDB" id="9GGR">
    <property type="method" value="EM"/>
    <property type="resolution" value="3.20 A"/>
    <property type="chains" value="Ak/c=1-115"/>
</dbReference>
<dbReference type="PDB" id="9H3L">
    <property type="method" value="EM"/>
    <property type="resolution" value="5.84 A"/>
    <property type="chains" value="P=2-115"/>
</dbReference>
<dbReference type="PDB" id="9H3M">
    <property type="method" value="EM"/>
    <property type="resolution" value="4.41 A"/>
    <property type="chains" value="P=2-115"/>
</dbReference>
<dbReference type="PDB" id="9H3O">
    <property type="method" value="EM"/>
    <property type="resolution" value="4.54 A"/>
    <property type="chains" value="P=2-115"/>
</dbReference>
<dbReference type="PDB" id="9H3P">
    <property type="method" value="EM"/>
    <property type="resolution" value="7.06 A"/>
    <property type="chains" value="P=2-115"/>
</dbReference>
<dbReference type="PDB" id="9H3R">
    <property type="method" value="EM"/>
    <property type="resolution" value="4.12 A"/>
    <property type="chains" value="P=2-115"/>
</dbReference>
<dbReference type="PDB" id="9H3S">
    <property type="method" value="EM"/>
    <property type="resolution" value="4.16 A"/>
    <property type="chains" value="P=2-115"/>
</dbReference>
<dbReference type="PDB" id="9H3T">
    <property type="method" value="EM"/>
    <property type="resolution" value="3.85 A"/>
    <property type="chains" value="P=2-115"/>
</dbReference>
<dbReference type="PDB" id="9H3U">
    <property type="method" value="EM"/>
    <property type="resolution" value="3.47 A"/>
    <property type="chains" value="P=2-115"/>
</dbReference>
<dbReference type="PDB" id="9H3V">
    <property type="method" value="EM"/>
    <property type="resolution" value="3.55 A"/>
    <property type="chains" value="P=2-115"/>
</dbReference>
<dbReference type="PDB" id="9H3W">
    <property type="method" value="EM"/>
    <property type="resolution" value="5.38 A"/>
    <property type="chains" value="P=2-115"/>
</dbReference>
<dbReference type="PDB" id="9H3X">
    <property type="method" value="EM"/>
    <property type="resolution" value="4.12 A"/>
    <property type="chains" value="P=2-115"/>
</dbReference>
<dbReference type="PDB" id="9H3Y">
    <property type="method" value="EM"/>
    <property type="resolution" value="3.09 A"/>
    <property type="chains" value="P=2-115"/>
</dbReference>
<dbReference type="PDB" id="9H3Z">
    <property type="method" value="EM"/>
    <property type="resolution" value="2.98 A"/>
    <property type="chains" value="P=2-115"/>
</dbReference>
<dbReference type="PDB" id="9HA1">
    <property type="method" value="EM"/>
    <property type="resolution" value="4.17 A"/>
    <property type="chains" value="P=2-115"/>
</dbReference>
<dbReference type="PDB" id="9HA2">
    <property type="method" value="EM"/>
    <property type="resolution" value="4.17 A"/>
    <property type="chains" value="P=2-115"/>
</dbReference>
<dbReference type="PDB" id="9HA4">
    <property type="method" value="EM"/>
    <property type="resolution" value="4.26 A"/>
    <property type="chains" value="P=2-115"/>
</dbReference>
<dbReference type="PDB" id="9HA5">
    <property type="method" value="EM"/>
    <property type="resolution" value="3.30 A"/>
    <property type="chains" value="P=2-115"/>
</dbReference>
<dbReference type="PDB" id="9HA6">
    <property type="method" value="EM"/>
    <property type="resolution" value="3.08 A"/>
    <property type="chains" value="P=2-115"/>
</dbReference>
<dbReference type="PDB" id="9HAI">
    <property type="method" value="EM"/>
    <property type="resolution" value="3.01 A"/>
    <property type="chains" value="P=2-115"/>
</dbReference>
<dbReference type="PDB" id="9HAM">
    <property type="method" value="EM"/>
    <property type="resolution" value="5.06 A"/>
    <property type="chains" value="P=2-115"/>
</dbReference>
<dbReference type="PDB" id="9MOR">
    <property type="method" value="EM"/>
    <property type="resolution" value="2.65 A"/>
    <property type="chains" value="P=1-115"/>
</dbReference>
<dbReference type="PDB" id="9MQ4">
    <property type="method" value="EM"/>
    <property type="resolution" value="2.78 A"/>
    <property type="chains" value="P=1-115"/>
</dbReference>
<dbReference type="PDBsum" id="2J28"/>
<dbReference type="PDBsum" id="2RDO"/>
<dbReference type="PDBsum" id="3BBX"/>
<dbReference type="PDBsum" id="3J5L"/>
<dbReference type="PDBsum" id="3J7Z"/>
<dbReference type="PDBsum" id="3J8G"/>
<dbReference type="PDBsum" id="3J9Y"/>
<dbReference type="PDBsum" id="3J9Z"/>
<dbReference type="PDBsum" id="3JA1"/>
<dbReference type="PDBsum" id="3JBU"/>
<dbReference type="PDBsum" id="3JBV"/>
<dbReference type="PDBsum" id="3JCD"/>
<dbReference type="PDBsum" id="3JCE"/>
<dbReference type="PDBsum" id="3JCJ"/>
<dbReference type="PDBsum" id="3JCN"/>
<dbReference type="PDBsum" id="4CSU"/>
<dbReference type="PDBsum" id="4U1U"/>
<dbReference type="PDBsum" id="4U1V"/>
<dbReference type="PDBsum" id="4U20"/>
<dbReference type="PDBsum" id="4U24"/>
<dbReference type="PDBsum" id="4U25"/>
<dbReference type="PDBsum" id="4U26"/>
<dbReference type="PDBsum" id="4U27"/>
<dbReference type="PDBsum" id="4UY8"/>
<dbReference type="PDBsum" id="4V47"/>
<dbReference type="PDBsum" id="4V48"/>
<dbReference type="PDBsum" id="4V4H"/>
<dbReference type="PDBsum" id="4V4Q"/>
<dbReference type="PDBsum" id="4V4V"/>
<dbReference type="PDBsum" id="4V4W"/>
<dbReference type="PDBsum" id="4V50"/>
<dbReference type="PDBsum" id="4V52"/>
<dbReference type="PDBsum" id="4V53"/>
<dbReference type="PDBsum" id="4V54"/>
<dbReference type="PDBsum" id="4V55"/>
<dbReference type="PDBsum" id="4V56"/>
<dbReference type="PDBsum" id="4V57"/>
<dbReference type="PDBsum" id="4V5B"/>
<dbReference type="PDBsum" id="4V5H"/>
<dbReference type="PDBsum" id="4V5Y"/>
<dbReference type="PDBsum" id="4V64"/>
<dbReference type="PDBsum" id="4V65"/>
<dbReference type="PDBsum" id="4V66"/>
<dbReference type="PDBsum" id="4V69"/>
<dbReference type="PDBsum" id="4V6C"/>
<dbReference type="PDBsum" id="4V6D"/>
<dbReference type="PDBsum" id="4V6E"/>
<dbReference type="PDBsum" id="4V6K"/>
<dbReference type="PDBsum" id="4V6L"/>
<dbReference type="PDBsum" id="4V6M"/>
<dbReference type="PDBsum" id="4V6N"/>
<dbReference type="PDBsum" id="4V6O"/>
<dbReference type="PDBsum" id="4V6P"/>
<dbReference type="PDBsum" id="4V6Q"/>
<dbReference type="PDBsum" id="4V6R"/>
<dbReference type="PDBsum" id="4V6S"/>
<dbReference type="PDBsum" id="4V6T"/>
<dbReference type="PDBsum" id="4V6V"/>
<dbReference type="PDBsum" id="4V6Y"/>
<dbReference type="PDBsum" id="4V6Z"/>
<dbReference type="PDBsum" id="4V70"/>
<dbReference type="PDBsum" id="4V71"/>
<dbReference type="PDBsum" id="4V72"/>
<dbReference type="PDBsum" id="4V73"/>
<dbReference type="PDBsum" id="4V74"/>
<dbReference type="PDBsum" id="4V75"/>
<dbReference type="PDBsum" id="4V76"/>
<dbReference type="PDBsum" id="4V77"/>
<dbReference type="PDBsum" id="4V78"/>
<dbReference type="PDBsum" id="4V79"/>
<dbReference type="PDBsum" id="4V7A"/>
<dbReference type="PDBsum" id="4V7B"/>
<dbReference type="PDBsum" id="4V7C"/>
<dbReference type="PDBsum" id="4V7D"/>
<dbReference type="PDBsum" id="4V7I"/>
<dbReference type="PDBsum" id="4V7S"/>
<dbReference type="PDBsum" id="4V7T"/>
<dbReference type="PDBsum" id="4V7U"/>
<dbReference type="PDBsum" id="4V7V"/>
<dbReference type="PDBsum" id="4V85"/>
<dbReference type="PDBsum" id="4V89"/>
<dbReference type="PDBsum" id="4V9C"/>
<dbReference type="PDBsum" id="4V9D"/>
<dbReference type="PDBsum" id="4V9O"/>
<dbReference type="PDBsum" id="4V9P"/>
<dbReference type="PDBsum" id="4WF1"/>
<dbReference type="PDBsum" id="4WOI"/>
<dbReference type="PDBsum" id="4WWW"/>
<dbReference type="PDBsum" id="4YBB"/>
<dbReference type="PDBsum" id="5ADY"/>
<dbReference type="PDBsum" id="5AFI"/>
<dbReference type="PDBsum" id="5AKA"/>
<dbReference type="PDBsum" id="5GAD"/>
<dbReference type="PDBsum" id="5GAE"/>
<dbReference type="PDBsum" id="5GAF"/>
<dbReference type="PDBsum" id="5GAG"/>
<dbReference type="PDBsum" id="5GAH"/>
<dbReference type="PDBsum" id="5H5U"/>
<dbReference type="PDBsum" id="5IQR"/>
<dbReference type="PDBsum" id="5IT8"/>
<dbReference type="PDBsum" id="5J5B"/>
<dbReference type="PDBsum" id="5J7L"/>
<dbReference type="PDBsum" id="5J88"/>
<dbReference type="PDBsum" id="5J8A"/>
<dbReference type="PDBsum" id="5J91"/>
<dbReference type="PDBsum" id="5JC9"/>
<dbReference type="PDBsum" id="5JTE"/>
<dbReference type="PDBsum" id="5JU8"/>
<dbReference type="PDBsum" id="5KCR"/>
<dbReference type="PDBsum" id="5KCS"/>
<dbReference type="PDBsum" id="5KPS"/>
<dbReference type="PDBsum" id="5KPV"/>
<dbReference type="PDBsum" id="5KPW"/>
<dbReference type="PDBsum" id="5KPX"/>
<dbReference type="PDBsum" id="5L3P"/>
<dbReference type="PDBsum" id="5LZA"/>
<dbReference type="PDBsum" id="5LZB"/>
<dbReference type="PDBsum" id="5LZC"/>
<dbReference type="PDBsum" id="5LZD"/>
<dbReference type="PDBsum" id="5LZE"/>
<dbReference type="PDBsum" id="5LZF"/>
<dbReference type="PDBsum" id="5MDV"/>
<dbReference type="PDBsum" id="5MDW"/>
<dbReference type="PDBsum" id="5MDY"/>
<dbReference type="PDBsum" id="5MDZ"/>
<dbReference type="PDBsum" id="5MGP"/>
<dbReference type="PDBsum" id="5NCO"/>
<dbReference type="PDBsum" id="5NP6"/>
<dbReference type="PDBsum" id="5NWY"/>
<dbReference type="PDBsum" id="5O2R"/>
<dbReference type="PDBsum" id="5U4I"/>
<dbReference type="PDBsum" id="5U9F"/>
<dbReference type="PDBsum" id="5U9G"/>
<dbReference type="PDBsum" id="5UYK"/>
<dbReference type="PDBsum" id="5UYL"/>
<dbReference type="PDBsum" id="5UYM"/>
<dbReference type="PDBsum" id="5UYN"/>
<dbReference type="PDBsum" id="5UYP"/>
<dbReference type="PDBsum" id="5UYQ"/>
<dbReference type="PDBsum" id="5WDT"/>
<dbReference type="PDBsum" id="5WE4"/>
<dbReference type="PDBsum" id="5WE6"/>
<dbReference type="PDBsum" id="5WF0"/>
<dbReference type="PDBsum" id="5WFK"/>
<dbReference type="PDBsum" id="5WFS"/>
<dbReference type="PDBsum" id="6BU8"/>
<dbReference type="PDBsum" id="6BY1"/>
<dbReference type="PDBsum" id="6C4I"/>
<dbReference type="PDBsum" id="6DNC"/>
<dbReference type="PDBsum" id="6ENF"/>
<dbReference type="PDBsum" id="6ENJ"/>
<dbReference type="PDBsum" id="6ENU"/>
<dbReference type="PDBsum" id="6GBZ"/>
<dbReference type="PDBsum" id="6GC0"/>
<dbReference type="PDBsum" id="6GC4"/>
<dbReference type="PDBsum" id="6GC6"/>
<dbReference type="PDBsum" id="6GC7"/>
<dbReference type="PDBsum" id="6GC8"/>
<dbReference type="PDBsum" id="6GWT"/>
<dbReference type="PDBsum" id="6GXM"/>
<dbReference type="PDBsum" id="6GXN"/>
<dbReference type="PDBsum" id="6GXO"/>
<dbReference type="PDBsum" id="6GXP"/>
<dbReference type="PDBsum" id="6H4N"/>
<dbReference type="PDBsum" id="6H58"/>
<dbReference type="PDBsum" id="6HRM"/>
<dbReference type="PDBsum" id="6I0Y"/>
<dbReference type="PDBsum" id="6I7V"/>
<dbReference type="PDBsum" id="6O9J"/>
<dbReference type="PDBsum" id="6O9K"/>
<dbReference type="PDBsum" id="6OFX"/>
<dbReference type="PDBsum" id="6OG7"/>
<dbReference type="PDBsum" id="6OGF"/>
<dbReference type="PDBsum" id="6OGG"/>
<dbReference type="PDBsum" id="6OGI"/>
<dbReference type="PDBsum" id="6OM6"/>
<dbReference type="PDBsum" id="6ORE"/>
<dbReference type="PDBsum" id="6ORL"/>
<dbReference type="PDBsum" id="6OSK"/>
<dbReference type="PDBsum" id="6OSQ"/>
<dbReference type="PDBsum" id="6OST"/>
<dbReference type="PDBsum" id="6OT3"/>
<dbReference type="PDBsum" id="6OUO"/>
<dbReference type="PDBsum" id="6PJ6"/>
<dbReference type="PDBsum" id="6Q97"/>
<dbReference type="PDBsum" id="6Q98"/>
<dbReference type="PDBsum" id="6Q9A"/>
<dbReference type="PDBsum" id="6QDW"/>
<dbReference type="PDBsum" id="6QUL"/>
<dbReference type="PDBsum" id="6S0K"/>
<dbReference type="PDBsum" id="6SZS"/>
<dbReference type="PDBsum" id="6TBV"/>
<dbReference type="PDBsum" id="6TC3"/>
<dbReference type="PDBsum" id="6U48"/>
<dbReference type="PDBsum" id="6VU3"/>
<dbReference type="PDBsum" id="6VWL"/>
<dbReference type="PDBsum" id="6VWM"/>
<dbReference type="PDBsum" id="6VWN"/>
<dbReference type="PDBsum" id="6VYQ"/>
<dbReference type="PDBsum" id="6VYR"/>
<dbReference type="PDBsum" id="6VYS"/>
<dbReference type="PDBsum" id="6VYT"/>
<dbReference type="PDBsum" id="6VYU"/>
<dbReference type="PDBsum" id="6VYW"/>
<dbReference type="PDBsum" id="6VYX"/>
<dbReference type="PDBsum" id="6VYY"/>
<dbReference type="PDBsum" id="6VYZ"/>
<dbReference type="PDBsum" id="6VZ2"/>
<dbReference type="PDBsum" id="6VZ3"/>
<dbReference type="PDBsum" id="6VZ5"/>
<dbReference type="PDBsum" id="6VZ7"/>
<dbReference type="PDBsum" id="6VZJ"/>
<dbReference type="PDBsum" id="6WD0"/>
<dbReference type="PDBsum" id="6WD1"/>
<dbReference type="PDBsum" id="6WD2"/>
<dbReference type="PDBsum" id="6WD3"/>
<dbReference type="PDBsum" id="6WD4"/>
<dbReference type="PDBsum" id="6WD5"/>
<dbReference type="PDBsum" id="6WD6"/>
<dbReference type="PDBsum" id="6WD7"/>
<dbReference type="PDBsum" id="6WD8"/>
<dbReference type="PDBsum" id="6WD9"/>
<dbReference type="PDBsum" id="6WDA"/>
<dbReference type="PDBsum" id="6WDB"/>
<dbReference type="PDBsum" id="6WDC"/>
<dbReference type="PDBsum" id="6WDD"/>
<dbReference type="PDBsum" id="6WDE"/>
<dbReference type="PDBsum" id="6WDF"/>
<dbReference type="PDBsum" id="6WDG"/>
<dbReference type="PDBsum" id="6WDH"/>
<dbReference type="PDBsum" id="6WDI"/>
<dbReference type="PDBsum" id="6WDJ"/>
<dbReference type="PDBsum" id="6WDK"/>
<dbReference type="PDBsum" id="6WDL"/>
<dbReference type="PDBsum" id="6WDM"/>
<dbReference type="PDBsum" id="6WNT"/>
<dbReference type="PDBsum" id="6WNV"/>
<dbReference type="PDBsum" id="6WNW"/>
<dbReference type="PDBsum" id="6X6T"/>
<dbReference type="PDBsum" id="6X7F"/>
<dbReference type="PDBsum" id="6X7K"/>
<dbReference type="PDBsum" id="6X9Q"/>
<dbReference type="PDBsum" id="6XDQ"/>
<dbReference type="PDBsum" id="6XDR"/>
<dbReference type="PDBsum" id="6XGF"/>
<dbReference type="PDBsum" id="6XII"/>
<dbReference type="PDBsum" id="6XIJ"/>
<dbReference type="PDBsum" id="6XZ7"/>
<dbReference type="PDBsum" id="6XZA"/>
<dbReference type="PDBsum" id="6XZB"/>
<dbReference type="PDBsum" id="6Y69"/>
<dbReference type="PDBsum" id="6YS3"/>
<dbReference type="PDBsum" id="6YSR"/>
<dbReference type="PDBsum" id="6YSS"/>
<dbReference type="PDBsum" id="6YST"/>
<dbReference type="PDBsum" id="6YSU"/>
<dbReference type="PDBsum" id="6ZTJ"/>
<dbReference type="PDBsum" id="6ZTL"/>
<dbReference type="PDBsum" id="6ZTM"/>
<dbReference type="PDBsum" id="6ZTN"/>
<dbReference type="PDBsum" id="6ZTO"/>
<dbReference type="PDBsum" id="6ZTP"/>
<dbReference type="PDBsum" id="6ZU1"/>
<dbReference type="PDBsum" id="7ABZ"/>
<dbReference type="PDBsum" id="7AC7"/>
<dbReference type="PDBsum" id="7ACJ"/>
<dbReference type="PDBsum" id="7ACR"/>
<dbReference type="PDBsum" id="7B5K"/>
<dbReference type="PDBsum" id="7BL2"/>
<dbReference type="PDBsum" id="7BL3"/>
<dbReference type="PDBsum" id="7BL4"/>
<dbReference type="PDBsum" id="7BL5"/>
<dbReference type="PDBsum" id="7BL6"/>
<dbReference type="PDBsum" id="7BV8"/>
<dbReference type="PDBsum" id="7D6Z"/>
<dbReference type="PDBsum" id="7D80"/>
<dbReference type="PDBsum" id="7JSS"/>
<dbReference type="PDBsum" id="7JSW"/>
<dbReference type="PDBsum" id="7JSZ"/>
<dbReference type="PDBsum" id="7JT1"/>
<dbReference type="PDBsum" id="7JT2"/>
<dbReference type="PDBsum" id="7JT3"/>
<dbReference type="PDBsum" id="7K00"/>
<dbReference type="PDBsum" id="7K50"/>
<dbReference type="PDBsum" id="7K51"/>
<dbReference type="PDBsum" id="7K52"/>
<dbReference type="PDBsum" id="7K53"/>
<dbReference type="PDBsum" id="7K54"/>
<dbReference type="PDBsum" id="7K55"/>
<dbReference type="PDBsum" id="7LV0"/>
<dbReference type="PDBsum" id="7LVK"/>
<dbReference type="PDBsum" id="7M5D"/>
<dbReference type="PDBsum" id="7N1P"/>
<dbReference type="PDBsum" id="7N2C"/>
<dbReference type="PDBsum" id="7N2U"/>
<dbReference type="PDBsum" id="7N2V"/>
<dbReference type="PDBsum" id="7N30"/>
<dbReference type="PDBsum" id="7N31"/>
<dbReference type="PDBsum" id="7NBU"/>
<dbReference type="PDBsum" id="7NWT"/>
<dbReference type="PDBsum" id="7O19"/>
<dbReference type="PDBsum" id="7O1A"/>
<dbReference type="PDBsum" id="7O1C"/>
<dbReference type="PDBsum" id="7ODE"/>
<dbReference type="PDBsum" id="7OIZ"/>
<dbReference type="PDBsum" id="7OJ0"/>
<dbReference type="PDBsum" id="7P3K"/>
<dbReference type="PDBsum" id="7PJS"/>
<dbReference type="PDBsum" id="7PJT"/>
<dbReference type="PDBsum" id="7PJU"/>
<dbReference type="PDBsum" id="7PJV"/>
<dbReference type="PDBsum" id="7PJW"/>
<dbReference type="PDBsum" id="7PJX"/>
<dbReference type="PDBsum" id="7PJY"/>
<dbReference type="PDBsum" id="7PJZ"/>
<dbReference type="PDBsum" id="7Q4K"/>
<dbReference type="PDBsum" id="7QG8"/>
<dbReference type="PDBsum" id="7QGH"/>
<dbReference type="PDBsum" id="7QGN"/>
<dbReference type="PDBsum" id="7QGR"/>
<dbReference type="PDBsum" id="7QQ3"/>
<dbReference type="PDBsum" id="7S1G"/>
<dbReference type="PDBsum" id="7S1H"/>
<dbReference type="PDBsum" id="7S1I"/>
<dbReference type="PDBsum" id="7S1J"/>
<dbReference type="PDBsum" id="7S1K"/>
<dbReference type="PDBsum" id="7SA4"/>
<dbReference type="PDBsum" id="7SS9"/>
<dbReference type="PDBsum" id="7SSD"/>
<dbReference type="PDBsum" id="7SSL"/>
<dbReference type="PDBsum" id="7SSN"/>
<dbReference type="PDBsum" id="7SSO"/>
<dbReference type="PDBsum" id="7SSW"/>
<dbReference type="PDBsum" id="7ST2"/>
<dbReference type="PDBsum" id="7ST6"/>
<dbReference type="PDBsum" id="7ST7"/>
<dbReference type="PDBsum" id="7TOS"/>
<dbReference type="PDBsum" id="7UG7"/>
<dbReference type="PDBsum" id="7UPH"/>
<dbReference type="PDBsum" id="7Y7C"/>
<dbReference type="PDBsum" id="7Y7D"/>
<dbReference type="PDBsum" id="7Y7E"/>
<dbReference type="PDBsum" id="7Y7F"/>
<dbReference type="PDBsum" id="7Y7G"/>
<dbReference type="PDBsum" id="7Y7H"/>
<dbReference type="PDBsum" id="7YLA"/>
<dbReference type="PDBsum" id="7Z20"/>
<dbReference type="PDBsum" id="7ZOD"/>
<dbReference type="PDBsum" id="7ZP8"/>
<dbReference type="PDBsum" id="7ZQ5"/>
<dbReference type="PDBsum" id="7ZQ6"/>
<dbReference type="PDBsum" id="7ZTA"/>
<dbReference type="PDBsum" id="8A3L"/>
<dbReference type="PDBsum" id="8AKN"/>
<dbReference type="PDBsum" id="8AM9"/>
<dbReference type="PDBsum" id="8ANA"/>
<dbReference type="PDBsum" id="8AP4"/>
<dbReference type="PDBsum" id="8AYE"/>
<dbReference type="PDBsum" id="8B0X"/>
<dbReference type="PDBsum" id="8B7Y"/>
<dbReference type="PDBsum" id="8BF7"/>
<dbReference type="PDBsum" id="8BGE"/>
<dbReference type="PDBsum" id="8BGH"/>
<dbReference type="PDBsum" id="8BH4"/>
<dbReference type="PDBsum" id="8BHJ"/>
<dbReference type="PDBsum" id="8BHL"/>
<dbReference type="PDBsum" id="8BHN"/>
<dbReference type="PDBsum" id="8BHP"/>
<dbReference type="PDBsum" id="8BIL"/>
<dbReference type="PDBsum" id="8BIM"/>
<dbReference type="PDBsum" id="8C8X"/>
<dbReference type="PDBsum" id="8C8Y"/>
<dbReference type="PDBsum" id="8C8Z"/>
<dbReference type="PDBsum" id="8C90"/>
<dbReference type="PDBsum" id="8C91"/>
<dbReference type="PDBsum" id="8C92"/>
<dbReference type="PDBsum" id="8C93"/>
<dbReference type="PDBsum" id="8C94"/>
<dbReference type="PDBsum" id="8C96"/>
<dbReference type="PDBsum" id="8C97"/>
<dbReference type="PDBsum" id="8CAM"/>
<dbReference type="PDBsum" id="8CEU"/>
<dbReference type="PDBsum" id="8CGD"/>
<dbReference type="PDBsum" id="8CGK"/>
<dbReference type="PDBsum" id="8CGV"/>
<dbReference type="PDBsum" id="8EIU"/>
<dbReference type="PDBsum" id="8EKC"/>
<dbReference type="PDBsum" id="8EMM"/>
<dbReference type="PDBsum" id="8FIZ"/>
<dbReference type="PDBsum" id="8FTO"/>
<dbReference type="PDBsum" id="8FZD"/>
<dbReference type="PDBsum" id="8FZE"/>
<dbReference type="PDBsum" id="8FZF"/>
<dbReference type="PDBsum" id="8FZG"/>
<dbReference type="PDBsum" id="8FZH"/>
<dbReference type="PDBsum" id="8FZI"/>
<dbReference type="PDBsum" id="8FZJ"/>
<dbReference type="PDBsum" id="8G2U"/>
<dbReference type="PDBsum" id="8G31"/>
<dbReference type="PDBsum" id="8G34"/>
<dbReference type="PDBsum" id="8G38"/>
<dbReference type="PDBsum" id="8G6W"/>
<dbReference type="PDBsum" id="8G6X"/>
<dbReference type="PDBsum" id="8G6Y"/>
<dbReference type="PDBsum" id="8G7P"/>
<dbReference type="PDBsum" id="8G7Q"/>
<dbReference type="PDBsum" id="8G7R"/>
<dbReference type="PDBsum" id="8G7S"/>
<dbReference type="PDBsum" id="8HSP"/>
<dbReference type="PDBsum" id="8HTZ"/>
<dbReference type="PDBsum" id="8HU1"/>
<dbReference type="PDBsum" id="8IFB"/>
<dbReference type="PDBsum" id="8IFC"/>
<dbReference type="PDBsum" id="8J1Z"/>
<dbReference type="PDBsum" id="8KIE"/>
<dbReference type="PDBsum" id="8P16"/>
<dbReference type="PDBsum" id="8P17"/>
<dbReference type="PDBsum" id="8P18"/>
<dbReference type="PDBsum" id="8PEG"/>
<dbReference type="PDBsum" id="8PHJ"/>
<dbReference type="PDBsum" id="8PKL"/>
<dbReference type="PDBsum" id="8PVA"/>
<dbReference type="PDBsum" id="8Q4F"/>
<dbReference type="PDBsum" id="8QBT"/>
<dbReference type="PDBsum" id="8QK7"/>
<dbReference type="PDBsum" id="8QOA"/>
<dbReference type="PDBsum" id="8R6C"/>
<dbReference type="PDBsum" id="8R8M"/>
<dbReference type="PDBsum" id="8RPY"/>
<dbReference type="PDBsum" id="8RPZ"/>
<dbReference type="PDBsum" id="8RQ0"/>
<dbReference type="PDBsum" id="8RQ2"/>
<dbReference type="PDBsum" id="8SYL"/>
<dbReference type="PDBsum" id="8T5D"/>
<dbReference type="PDBsum" id="8T5H"/>
<dbReference type="PDBsum" id="8URY"/>
<dbReference type="PDBsum" id="8VS9"/>
<dbReference type="PDBsum" id="8VSA"/>
<dbReference type="PDBsum" id="8W51"/>
<dbReference type="PDBsum" id="8YUO"/>
<dbReference type="PDBsum" id="8YUP"/>
<dbReference type="PDBsum" id="8YUQ"/>
<dbReference type="PDBsum" id="8YUR"/>
<dbReference type="PDBsum" id="8YUS"/>
<dbReference type="PDBsum" id="9AX7"/>
<dbReference type="PDBsum" id="9CG5"/>
<dbReference type="PDBsum" id="9CG6"/>
<dbReference type="PDBsum" id="9CG7"/>
<dbReference type="PDBsum" id="9D89"/>
<dbReference type="PDBsum" id="9DYG"/>
<dbReference type="PDBsum" id="9FBV"/>
<dbReference type="PDBsum" id="9GFT"/>
<dbReference type="PDBsum" id="9GGR"/>
<dbReference type="PDBsum" id="9H3L"/>
<dbReference type="PDBsum" id="9H3M"/>
<dbReference type="PDBsum" id="9H3O"/>
<dbReference type="PDBsum" id="9H3P"/>
<dbReference type="PDBsum" id="9H3R"/>
<dbReference type="PDBsum" id="9H3S"/>
<dbReference type="PDBsum" id="9H3T"/>
<dbReference type="PDBsum" id="9H3U"/>
<dbReference type="PDBsum" id="9H3V"/>
<dbReference type="PDBsum" id="9H3W"/>
<dbReference type="PDBsum" id="9H3X"/>
<dbReference type="PDBsum" id="9H3Y"/>
<dbReference type="PDBsum" id="9H3Z"/>
<dbReference type="PDBsum" id="9HA1"/>
<dbReference type="PDBsum" id="9HA2"/>
<dbReference type="PDBsum" id="9HA4"/>
<dbReference type="PDBsum" id="9HA5"/>
<dbReference type="PDBsum" id="9HA6"/>
<dbReference type="PDBsum" id="9HAI"/>
<dbReference type="PDBsum" id="9HAM"/>
<dbReference type="PDBsum" id="9MOR"/>
<dbReference type="PDBsum" id="9MQ4"/>
<dbReference type="EMDB" id="EMD-0076"/>
<dbReference type="EMDB" id="EMD-0080"/>
<dbReference type="EMDB" id="EMD-0081"/>
<dbReference type="EMDB" id="EMD-0082"/>
<dbReference type="EMDB" id="EMD-0083"/>
<dbReference type="EMDB" id="EMD-0137"/>
<dbReference type="EMDB" id="EMD-0139"/>
<dbReference type="EMDB" id="EMD-0261"/>
<dbReference type="EMDB" id="EMD-0322"/>
<dbReference type="EMDB" id="EMD-10073"/>
<dbReference type="EMDB" id="EMD-10353"/>
<dbReference type="EMDB" id="EMD-10453"/>
<dbReference type="EMDB" id="EMD-10458"/>
<dbReference type="EMDB" id="EMD-10655"/>
<dbReference type="EMDB" id="EMD-10656"/>
<dbReference type="EMDB" id="EMD-10657"/>
<dbReference type="EMDB" id="EMD-10705"/>
<dbReference type="EMDB" id="EMD-10905"/>
<dbReference type="EMDB" id="EMD-10906"/>
<dbReference type="EMDB" id="EMD-10907"/>
<dbReference type="EMDB" id="EMD-10908"/>
<dbReference type="EMDB" id="EMD-11418"/>
<dbReference type="EMDB" id="EMD-11419"/>
<dbReference type="EMDB" id="EMD-11420"/>
<dbReference type="EMDB" id="EMD-11421"/>
<dbReference type="EMDB" id="EMD-11422"/>
<dbReference type="EMDB" id="EMD-11423"/>
<dbReference type="EMDB" id="EMD-11426"/>
<dbReference type="EMDB" id="EMD-11710"/>
<dbReference type="EMDB" id="EMD-11713"/>
<dbReference type="EMDB" id="EMD-11717"/>
<dbReference type="EMDB" id="EMD-11718"/>
<dbReference type="EMDB" id="EMD-12035"/>
<dbReference type="EMDB" id="EMD-12215"/>
<dbReference type="EMDB" id="EMD-12216"/>
<dbReference type="EMDB" id="EMD-12217"/>
<dbReference type="EMDB" id="EMD-12218"/>
<dbReference type="EMDB" id="EMD-12219"/>
<dbReference type="EMDB" id="EMD-12261"/>
<dbReference type="EMDB" id="EMD-12635"/>
<dbReference type="EMDB" id="EMD-12693"/>
<dbReference type="EMDB" id="EMD-12694"/>
<dbReference type="EMDB" id="EMD-12695"/>
<dbReference type="EMDB" id="EMD-12826"/>
<dbReference type="EMDB" id="EMD-12936"/>
<dbReference type="EMDB" id="EMD-12937"/>
<dbReference type="EMDB" id="EMD-13180"/>
<dbReference type="EMDB" id="EMD-13458"/>
<dbReference type="EMDB" id="EMD-13459"/>
<dbReference type="EMDB" id="EMD-13461"/>
<dbReference type="EMDB" id="EMD-13462"/>
<dbReference type="EMDB" id="EMD-13463"/>
<dbReference type="EMDB" id="EMD-13464"/>
<dbReference type="EMDB" id="EMD-13465"/>
<dbReference type="EMDB" id="EMD-13805"/>
<dbReference type="EMDB" id="EMD-13952"/>
<dbReference type="EMDB" id="EMD-13955"/>
<dbReference type="EMDB" id="EMD-13956"/>
<dbReference type="EMDB" id="EMD-13958"/>
<dbReference type="EMDB" id="EMD-14121"/>
<dbReference type="EMDB" id="EMD-14454"/>
<dbReference type="EMDB" id="EMD-14846"/>
<dbReference type="EMDB" id="EMD-14850"/>
<dbReference type="EMDB" id="EMD-14864"/>
<dbReference type="EMDB" id="EMD-14865"/>
<dbReference type="EMDB" id="EMD-14956"/>
<dbReference type="EMDB" id="EMD-15116"/>
<dbReference type="EMDB" id="EMD-15558"/>
<dbReference type="EMDB" id="EMD-15712"/>
<dbReference type="EMDB" id="EMD-15793"/>
<dbReference type="EMDB" id="EMD-15905"/>
<dbReference type="EMDB" id="EMD-16015"/>
<dbReference type="EMDB" id="EMD-16029"/>
<dbReference type="EMDB" id="EMD-16031"/>
<dbReference type="EMDB" id="EMD-16047"/>
<dbReference type="EMDB" id="EMD-16057"/>
<dbReference type="EMDB" id="EMD-16059"/>
<dbReference type="EMDB" id="EMD-16062"/>
<dbReference type="EMDB" id="EMD-16065"/>
<dbReference type="EMDB" id="EMD-16081"/>
<dbReference type="EMDB" id="EMD-16082"/>
<dbReference type="EMDB" id="EMD-16494"/>
<dbReference type="EMDB" id="EMD-16495"/>
<dbReference type="EMDB" id="EMD-16496"/>
<dbReference type="EMDB" id="EMD-16497"/>
<dbReference type="EMDB" id="EMD-16498"/>
<dbReference type="EMDB" id="EMD-16499"/>
<dbReference type="EMDB" id="EMD-16500"/>
<dbReference type="EMDB" id="EMD-16501"/>
<dbReference type="EMDB" id="EMD-16503"/>
<dbReference type="EMDB" id="EMD-16504"/>
<dbReference type="EMDB" id="EMD-16530"/>
<dbReference type="EMDB" id="EMD-16613"/>
<dbReference type="EMDB" id="EMD-16641"/>
<dbReference type="EMDB" id="EMD-16646"/>
<dbReference type="EMDB" id="EMD-16652"/>
<dbReference type="EMDB" id="EMD-17346"/>
<dbReference type="EMDB" id="EMD-17347"/>
<dbReference type="EMDB" id="EMD-17348"/>
<dbReference type="EMDB" id="EMD-17631"/>
<dbReference type="EMDB" id="EMD-17667"/>
<dbReference type="EMDB" id="EMD-17743"/>
<dbReference type="EMDB" id="EMD-17959"/>
<dbReference type="EMDB" id="EMD-18145"/>
<dbReference type="EMDB" id="EMD-18320"/>
<dbReference type="EMDB" id="EMD-18458"/>
<dbReference type="EMDB" id="EMD-18534"/>
<dbReference type="EMDB" id="EMD-18950"/>
<dbReference type="EMDB" id="EMD-19004"/>
<dbReference type="EMDB" id="EMD-19426"/>
<dbReference type="EMDB" id="EMD-19427"/>
<dbReference type="EMDB" id="EMD-19428"/>
<dbReference type="EMDB" id="EMD-19429"/>
<dbReference type="EMDB" id="EMD-20048"/>
<dbReference type="EMDB" id="EMD-20052"/>
<dbReference type="EMDB" id="EMD-21420"/>
<dbReference type="EMDB" id="EMD-21421"/>
<dbReference type="EMDB" id="EMD-21422"/>
<dbReference type="EMDB" id="EMD-21620"/>
<dbReference type="EMDB" id="EMD-21625"/>
<dbReference type="EMDB" id="EMD-21630"/>
<dbReference type="EMDB" id="EMD-21631"/>
<dbReference type="EMDB" id="EMD-21632"/>
<dbReference type="EMDB" id="EMD-21633"/>
<dbReference type="EMDB" id="EMD-21634"/>
<dbReference type="EMDB" id="EMD-21635"/>
<dbReference type="EMDB" id="EMD-21636"/>
<dbReference type="EMDB" id="EMD-21637"/>
<dbReference type="EMDB" id="EMD-21638"/>
<dbReference type="EMDB" id="EMD-21639"/>
<dbReference type="EMDB" id="EMD-21640"/>
<dbReference type="EMDB" id="EMD-21641"/>
<dbReference type="EMDB" id="EMD-21856"/>
<dbReference type="EMDB" id="EMD-21857"/>
<dbReference type="EMDB" id="EMD-21858"/>
<dbReference type="EMDB" id="EMD-22459"/>
<dbReference type="EMDB" id="EMD-22461"/>
<dbReference type="EMDB" id="EMD-22464"/>
<dbReference type="EMDB" id="EMD-22466"/>
<dbReference type="EMDB" id="EMD-22469"/>
<dbReference type="EMDB" id="EMD-22472"/>
<dbReference type="EMDB" id="EMD-22669"/>
<dbReference type="EMDB" id="EMD-22670"/>
<dbReference type="EMDB" id="EMD-22671"/>
<dbReference type="EMDB" id="EMD-22672"/>
<dbReference type="EMDB" id="EMD-22673"/>
<dbReference type="EMDB" id="EMD-22674"/>
<dbReference type="EMDB" id="EMD-23528"/>
<dbReference type="EMDB" id="EMD-24120"/>
<dbReference type="EMDB" id="EMD-24132"/>
<dbReference type="EMDB" id="EMD-24133"/>
<dbReference type="EMDB" id="EMD-24134"/>
<dbReference type="EMDB" id="EMD-24135"/>
<dbReference type="EMDB" id="EMD-24136"/>
<dbReference type="EMDB" id="EMD-24803"/>
<dbReference type="EMDB" id="EMD-25405"/>
<dbReference type="EMDB" id="EMD-25407"/>
<dbReference type="EMDB" id="EMD-25409"/>
<dbReference type="EMDB" id="EMD-25410"/>
<dbReference type="EMDB" id="EMD-25411"/>
<dbReference type="EMDB" id="EMD-25415"/>
<dbReference type="EMDB" id="EMD-25418"/>
<dbReference type="EMDB" id="EMD-25420"/>
<dbReference type="EMDB" id="EMD-25421"/>
<dbReference type="EMDB" id="EMD-30215"/>
<dbReference type="EMDB" id="EMD-30598"/>
<dbReference type="EMDB" id="EMD-30611"/>
<dbReference type="EMDB" id="EMD-33660"/>
<dbReference type="EMDB" id="EMD-33661"/>
<dbReference type="EMDB" id="EMD-33662"/>
<dbReference type="EMDB" id="EMD-33663"/>
<dbReference type="EMDB" id="EMD-33664"/>
<dbReference type="EMDB" id="EMD-33665"/>
<dbReference type="EMDB" id="EMD-33904"/>
<dbReference type="EMDB" id="EMD-3489"/>
<dbReference type="EMDB" id="EMD-3490"/>
<dbReference type="EMDB" id="EMD-3492"/>
<dbReference type="EMDB" id="EMD-3493"/>
<dbReference type="EMDB" id="EMD-35001"/>
<dbReference type="EMDB" id="EMD-35020"/>
<dbReference type="EMDB" id="EMD-35022"/>
<dbReference type="EMDB" id="EMD-3508"/>
<dbReference type="EMDB" id="EMD-35411"/>
<dbReference type="EMDB" id="EMD-35412"/>
<dbReference type="EMDB" id="EMD-35939"/>
<dbReference type="EMDB" id="EMD-3617"/>
<dbReference type="EMDB" id="EMD-3713"/>
<dbReference type="EMDB" id="EMD-37258"/>
<dbReference type="EMDB" id="EMD-37271"/>
<dbReference type="EMDB" id="EMD-3730"/>
<dbReference type="EMDB" id="EMD-3898"/>
<dbReference type="EMDB" id="EMD-3899"/>
<dbReference type="EMDB" id="EMD-3903"/>
<dbReference type="EMDB" id="EMD-39577"/>
<dbReference type="EMDB" id="EMD-39578"/>
<dbReference type="EMDB" id="EMD-39579"/>
<dbReference type="EMDB" id="EMD-39580"/>
<dbReference type="EMDB" id="EMD-39581"/>
<dbReference type="EMDB" id="EMD-4001"/>
<dbReference type="EMDB" id="EMD-4121"/>
<dbReference type="EMDB" id="EMD-4122"/>
<dbReference type="EMDB" id="EMD-4123"/>
<dbReference type="EMDB" id="EMD-4124"/>
<dbReference type="EMDB" id="EMD-4125"/>
<dbReference type="EMDB" id="EMD-4126"/>
<dbReference type="EMDB" id="EMD-4378"/>
<dbReference type="EMDB" id="EMD-4379"/>
<dbReference type="EMDB" id="EMD-4380"/>
<dbReference type="EMDB" id="EMD-4381"/>
<dbReference type="EMDB" id="EMD-4382"/>
<dbReference type="EMDB" id="EMD-4383"/>
<dbReference type="EMDB" id="EMD-4476"/>
<dbReference type="EMDB" id="EMD-4477"/>
<dbReference type="EMDB" id="EMD-4478"/>
<dbReference type="EMDB" id="EMD-4638"/>
<dbReference type="EMDB" id="EMD-47303"/>
<dbReference type="EMDB" id="EMD-50296"/>
<dbReference type="EMDB" id="EMD-51318"/>
<dbReference type="EMDB" id="EMD-51340"/>
<dbReference type="EMDB" id="EMD-51829"/>
<dbReference type="EMDB" id="EMD-51830"/>
<dbReference type="EMDB" id="EMD-51832"/>
<dbReference type="EMDB" id="EMD-51833"/>
<dbReference type="EMDB" id="EMD-51835"/>
<dbReference type="EMDB" id="EMD-51836"/>
<dbReference type="EMDB" id="EMD-51837"/>
<dbReference type="EMDB" id="EMD-51838"/>
<dbReference type="EMDB" id="EMD-51839"/>
<dbReference type="EMDB" id="EMD-51840"/>
<dbReference type="EMDB" id="EMD-51841"/>
<dbReference type="EMDB" id="EMD-51842"/>
<dbReference type="EMDB" id="EMD-51843"/>
<dbReference type="EMDB" id="EMD-51973"/>
<dbReference type="EMDB" id="EMD-51974"/>
<dbReference type="EMDB" id="EMD-51976"/>
<dbReference type="EMDB" id="EMD-51977"/>
<dbReference type="EMDB" id="EMD-51978"/>
<dbReference type="EMDB" id="EMD-51981"/>
<dbReference type="EMDB" id="EMD-51983"/>
<dbReference type="EMDB" id="EMD-6667"/>
<dbReference type="EMDB" id="EMD-7289"/>
<dbReference type="EMDB" id="EMD-7341"/>
<dbReference type="EMDB" id="EMD-8000"/>
<dbReference type="EMDB" id="EMD-8001"/>
<dbReference type="EMDB" id="EMD-8002"/>
<dbReference type="EMDB" id="EMD-8003"/>
<dbReference type="EMDB" id="EMD-8004"/>
<dbReference type="EMDB" id="EMD-8107"/>
<dbReference type="EMDB" id="EMD-8175"/>
<dbReference type="EMDB" id="EMD-8176"/>
<dbReference type="EMDB" id="EMD-8237"/>
<dbReference type="EMDB" id="EMD-8238"/>
<dbReference type="EMDB" id="EMD-8279"/>
<dbReference type="EMDB" id="EMD-8280"/>
<dbReference type="EMDB" id="EMD-8281"/>
<dbReference type="EMDB" id="EMD-8282"/>
<dbReference type="EMDB" id="EMD-8505"/>
<dbReference type="EMDB" id="EMD-8615"/>
<dbReference type="EMDB" id="EMD-8616"/>
<dbReference type="EMDB" id="EMD-8617"/>
<dbReference type="EMDB" id="EMD-8618"/>
<dbReference type="EMDB" id="EMD-8619"/>
<dbReference type="EMDB" id="EMD-8620"/>
<dbReference type="EMDB" id="EMD-8813"/>
<dbReference type="EMDB" id="EMD-8814"/>
<dbReference type="EMDB" id="EMD-8815"/>
<dbReference type="EMDB" id="EMD-8828"/>
<dbReference type="SMR" id="P0A7K6"/>
<dbReference type="BioGRID" id="4260606">
    <property type="interactions" value="34"/>
</dbReference>
<dbReference type="BioGRID" id="851432">
    <property type="interactions" value="2"/>
</dbReference>
<dbReference type="ComplexPortal" id="CPX-3807">
    <property type="entry name" value="50S large ribosomal subunit"/>
</dbReference>
<dbReference type="DIP" id="DIP-35793N"/>
<dbReference type="FunCoup" id="P0A7K6">
    <property type="interactions" value="1181"/>
</dbReference>
<dbReference type="IntAct" id="P0A7K6">
    <property type="interactions" value="123"/>
</dbReference>
<dbReference type="STRING" id="511145.b2606"/>
<dbReference type="jPOST" id="P0A7K6"/>
<dbReference type="PaxDb" id="511145-b2606"/>
<dbReference type="EnsemblBacteria" id="AAC75655">
    <property type="protein sequence ID" value="AAC75655"/>
    <property type="gene ID" value="b2606"/>
</dbReference>
<dbReference type="GeneID" id="93774456"/>
<dbReference type="GeneID" id="947096"/>
<dbReference type="KEGG" id="ecj:JW2587"/>
<dbReference type="KEGG" id="eco:b2606"/>
<dbReference type="KEGG" id="ecoc:C3026_14430"/>
<dbReference type="PATRIC" id="fig|1411691.4.peg.4133"/>
<dbReference type="EchoBASE" id="EB0873"/>
<dbReference type="eggNOG" id="COG0335">
    <property type="taxonomic scope" value="Bacteria"/>
</dbReference>
<dbReference type="HOGENOM" id="CLU_103507_2_1_6"/>
<dbReference type="InParanoid" id="P0A7K6"/>
<dbReference type="OMA" id="TITVYYE"/>
<dbReference type="OrthoDB" id="9803541at2"/>
<dbReference type="PhylomeDB" id="P0A7K6"/>
<dbReference type="BioCyc" id="EcoCyc:EG10880-MONOMER"/>
<dbReference type="BioCyc" id="MetaCyc:EG10880-MONOMER"/>
<dbReference type="EvolutionaryTrace" id="P0A7K6"/>
<dbReference type="PRO" id="PR:P0A7K6"/>
<dbReference type="Proteomes" id="UP000000625">
    <property type="component" value="Chromosome"/>
</dbReference>
<dbReference type="GO" id="GO:0005737">
    <property type="term" value="C:cytoplasm"/>
    <property type="evidence" value="ECO:0000314"/>
    <property type="project" value="ComplexPortal"/>
</dbReference>
<dbReference type="GO" id="GO:0005829">
    <property type="term" value="C:cytosol"/>
    <property type="evidence" value="ECO:0000314"/>
    <property type="project" value="EcoCyc"/>
</dbReference>
<dbReference type="GO" id="GO:0022625">
    <property type="term" value="C:cytosolic large ribosomal subunit"/>
    <property type="evidence" value="ECO:0000314"/>
    <property type="project" value="CAFA"/>
</dbReference>
<dbReference type="GO" id="GO:0070180">
    <property type="term" value="F:large ribosomal subunit rRNA binding"/>
    <property type="evidence" value="ECO:0000314"/>
    <property type="project" value="EcoCyc"/>
</dbReference>
<dbReference type="GO" id="GO:0003735">
    <property type="term" value="F:structural constituent of ribosome"/>
    <property type="evidence" value="ECO:0000314"/>
    <property type="project" value="CAFA"/>
</dbReference>
<dbReference type="GO" id="GO:0002181">
    <property type="term" value="P:cytoplasmic translation"/>
    <property type="evidence" value="ECO:0000303"/>
    <property type="project" value="ComplexPortal"/>
</dbReference>
<dbReference type="GO" id="GO:0000027">
    <property type="term" value="P:ribosomal large subunit assembly"/>
    <property type="evidence" value="ECO:0000314"/>
    <property type="project" value="CAFA"/>
</dbReference>
<dbReference type="FunFam" id="2.30.30.790:FF:000001">
    <property type="entry name" value="50S ribosomal protein L19"/>
    <property type="match status" value="1"/>
</dbReference>
<dbReference type="Gene3D" id="2.30.30.790">
    <property type="match status" value="1"/>
</dbReference>
<dbReference type="HAMAP" id="MF_00402">
    <property type="entry name" value="Ribosomal_bL19"/>
    <property type="match status" value="1"/>
</dbReference>
<dbReference type="InterPro" id="IPR001857">
    <property type="entry name" value="Ribosomal_bL19"/>
</dbReference>
<dbReference type="InterPro" id="IPR018257">
    <property type="entry name" value="Ribosomal_bL19_CS"/>
</dbReference>
<dbReference type="InterPro" id="IPR038657">
    <property type="entry name" value="Ribosomal_bL19_sf"/>
</dbReference>
<dbReference type="InterPro" id="IPR008991">
    <property type="entry name" value="Translation_prot_SH3-like_sf"/>
</dbReference>
<dbReference type="NCBIfam" id="TIGR01024">
    <property type="entry name" value="rplS_bact"/>
    <property type="match status" value="1"/>
</dbReference>
<dbReference type="PANTHER" id="PTHR15680:SF9">
    <property type="entry name" value="LARGE RIBOSOMAL SUBUNIT PROTEIN BL19M"/>
    <property type="match status" value="1"/>
</dbReference>
<dbReference type="PANTHER" id="PTHR15680">
    <property type="entry name" value="RIBOSOMAL PROTEIN L19"/>
    <property type="match status" value="1"/>
</dbReference>
<dbReference type="Pfam" id="PF01245">
    <property type="entry name" value="Ribosomal_L19"/>
    <property type="match status" value="1"/>
</dbReference>
<dbReference type="PIRSF" id="PIRSF002191">
    <property type="entry name" value="Ribosomal_L19"/>
    <property type="match status" value="1"/>
</dbReference>
<dbReference type="PRINTS" id="PR00061">
    <property type="entry name" value="RIBOSOMALL19"/>
</dbReference>
<dbReference type="SUPFAM" id="SSF50104">
    <property type="entry name" value="Translation proteins SH3-like domain"/>
    <property type="match status" value="1"/>
</dbReference>
<dbReference type="PROSITE" id="PS01015">
    <property type="entry name" value="RIBOSOMAL_L19"/>
    <property type="match status" value="1"/>
</dbReference>
<comment type="function">
    <text evidence="1">This protein is located at the 30S-50S ribosomal subunit interface and may play a role in the structure and function of the aminoacyl-tRNA binding site.</text>
</comment>
<comment type="function">
    <text evidence="3 4">In the 70S ribosome it has been modeled to make two contacts with the 16S rRNA of the 30S subunit forming part of bridges B6 and B8 (PubMed:12809609). In the 3.5 A resolved structures L14 and L19 interact and together make contact with the 16S rRNA (PubMed:16272117). The protein conformation is quite different between the 50S and 70S structures, which may be necessary for translocation (PubMed:16272117).</text>
</comment>
<comment type="subunit">
    <text evidence="2 3 4 5 6 7 8 9 10 11 12">Part of the 50S ribosomal subunit (PubMed:10094780, PubMed:12809609, PubMed:16272117, PubMed:24844575, PubMed:25310980, PubMed:27906160, PubMed:27906161, PubMed:27934701, PubMed:339951, PubMed:33639093). Contacts L14 (PubMed:16272117, PubMed:2665813). Forms two bridges to the 30S subunit in the 70S ribosome, contacting the 16S rRNA (PubMed:12809609). In pre-50S ribosomal subunits interacts with RsfS, which may inhibit association with the 30S subunit (PubMed:33639093).</text>
</comment>
<comment type="induction">
    <text evidence="13">Part of the rpsP-rimM-trmD-rplS operon.</text>
</comment>
<comment type="mass spectrometry"/>
<comment type="similarity">
    <text evidence="1 15">Belongs to the bacterial ribosomal protein bL19 family.</text>
</comment>
<keyword id="KW-0002">3D-structure</keyword>
<keyword id="KW-0903">Direct protein sequencing</keyword>
<keyword id="KW-1185">Reference proteome</keyword>
<keyword id="KW-0687">Ribonucleoprotein</keyword>
<keyword id="KW-0689">Ribosomal protein</keyword>
<keyword id="KW-0694">RNA-binding</keyword>
<keyword id="KW-0699">rRNA-binding</keyword>
<feature type="initiator methionine" description="Removed" evidence="12">
    <location>
        <position position="1"/>
    </location>
</feature>
<feature type="chain" id="PRO_0000163451" description="Large ribosomal subunit protein bL19">
    <location>
        <begin position="2"/>
        <end position="115"/>
    </location>
</feature>
<feature type="helix" evidence="21">
    <location>
        <begin position="3"/>
        <end position="10"/>
    </location>
</feature>
<feature type="strand" evidence="21">
    <location>
        <begin position="25"/>
        <end position="34"/>
    </location>
</feature>
<feature type="strand" evidence="21">
    <location>
        <begin position="37"/>
        <end position="51"/>
    </location>
</feature>
<feature type="helix" evidence="21">
    <location>
        <begin position="54"/>
        <end position="56"/>
    </location>
</feature>
<feature type="strand" evidence="21">
    <location>
        <begin position="58"/>
        <end position="65"/>
    </location>
</feature>
<feature type="strand" evidence="21">
    <location>
        <begin position="68"/>
        <end position="75"/>
    </location>
</feature>
<feature type="strand" evidence="21">
    <location>
        <begin position="81"/>
        <end position="88"/>
    </location>
</feature>
<feature type="strand" evidence="20">
    <location>
        <begin position="93"/>
        <end position="95"/>
    </location>
</feature>
<feature type="helix" evidence="21">
    <location>
        <begin position="98"/>
        <end position="102"/>
    </location>
</feature>
<feature type="turn" evidence="21">
    <location>
        <begin position="105"/>
        <end position="108"/>
    </location>
</feature>
<proteinExistence type="evidence at protein level"/>
<name>RL19_ECOLI</name>
<protein>
    <recommendedName>
        <fullName evidence="1 14">Large ribosomal subunit protein bL19</fullName>
    </recommendedName>
    <alternativeName>
        <fullName>50S ribosomal protein L19</fullName>
    </alternativeName>
</protein>
<reference key="1">
    <citation type="journal article" date="1983" name="EMBO J.">
        <title>The nucleotide sequence of an Escherichia coli operon containing genes for the tRNA(m1G)methyltransferase, the ribosomal proteins S16 and L19 and a 21-K polypeptide.</title>
        <authorList>
            <person name="Bystroem A.S."/>
            <person name="Hjalmarsson K.J."/>
            <person name="Wikstroem P.M."/>
            <person name="Bjoerk G.R."/>
        </authorList>
    </citation>
    <scope>NUCLEOTIDE SEQUENCE [GENOMIC DNA]</scope>
    <scope>OPERON STRUCTURE</scope>
    <source>
        <strain>K12</strain>
    </source>
</reference>
<reference key="2">
    <citation type="journal article" date="1997" name="DNA Res.">
        <title>Construction of a contiguous 874-kb sequence of the Escherichia coli-K12 genome corresponding to 50.0-68.8 min on the linkage map and analysis of its sequence features.</title>
        <authorList>
            <person name="Yamamoto Y."/>
            <person name="Aiba H."/>
            <person name="Baba T."/>
            <person name="Hayashi K."/>
            <person name="Inada T."/>
            <person name="Isono K."/>
            <person name="Itoh T."/>
            <person name="Kimura S."/>
            <person name="Kitagawa M."/>
            <person name="Makino K."/>
            <person name="Miki T."/>
            <person name="Mitsuhashi N."/>
            <person name="Mizobuchi K."/>
            <person name="Mori H."/>
            <person name="Nakade S."/>
            <person name="Nakamura Y."/>
            <person name="Nashimoto H."/>
            <person name="Oshima T."/>
            <person name="Oyama S."/>
            <person name="Saito N."/>
            <person name="Sampei G."/>
            <person name="Satoh Y."/>
            <person name="Sivasundaram S."/>
            <person name="Tagami H."/>
            <person name="Takahashi H."/>
            <person name="Takeda J."/>
            <person name="Takemoto K."/>
            <person name="Uehara K."/>
            <person name="Wada C."/>
            <person name="Yamagata S."/>
            <person name="Horiuchi T."/>
        </authorList>
    </citation>
    <scope>NUCLEOTIDE SEQUENCE [LARGE SCALE GENOMIC DNA]</scope>
    <source>
        <strain>K12 / W3110 / ATCC 27325 / DSM 5911</strain>
    </source>
</reference>
<reference key="3">
    <citation type="journal article" date="1997" name="Science">
        <title>The complete genome sequence of Escherichia coli K-12.</title>
        <authorList>
            <person name="Blattner F.R."/>
            <person name="Plunkett G. III"/>
            <person name="Bloch C.A."/>
            <person name="Perna N.T."/>
            <person name="Burland V."/>
            <person name="Riley M."/>
            <person name="Collado-Vides J."/>
            <person name="Glasner J.D."/>
            <person name="Rode C.K."/>
            <person name="Mayhew G.F."/>
            <person name="Gregor J."/>
            <person name="Davis N.W."/>
            <person name="Kirkpatrick H.A."/>
            <person name="Goeden M.A."/>
            <person name="Rose D.J."/>
            <person name="Mau B."/>
            <person name="Shao Y."/>
        </authorList>
    </citation>
    <scope>NUCLEOTIDE SEQUENCE [LARGE SCALE GENOMIC DNA]</scope>
    <source>
        <strain>K12 / MG1655 / ATCC 47076</strain>
    </source>
</reference>
<reference key="4">
    <citation type="journal article" date="2006" name="Mol. Syst. Biol.">
        <title>Highly accurate genome sequences of Escherichia coli K-12 strains MG1655 and W3110.</title>
        <authorList>
            <person name="Hayashi K."/>
            <person name="Morooka N."/>
            <person name="Yamamoto Y."/>
            <person name="Fujita K."/>
            <person name="Isono K."/>
            <person name="Choi S."/>
            <person name="Ohtsubo E."/>
            <person name="Baba T."/>
            <person name="Wanner B.L."/>
            <person name="Mori H."/>
            <person name="Horiuchi T."/>
        </authorList>
    </citation>
    <scope>NUCLEOTIDE SEQUENCE [LARGE SCALE GENOMIC DNA]</scope>
    <source>
        <strain>K12 / W3110 / ATCC 27325 / DSM 5911</strain>
    </source>
</reference>
<reference key="5">
    <citation type="journal article" date="1978" name="Biochemistry">
        <title>Primary structure of protein L19 from the large subunit of Escherichia coli ribosomes.</title>
        <authorList>
            <person name="Brosius J."/>
            <person name="Arfsten U."/>
        </authorList>
    </citation>
    <scope>PROTEIN SEQUENCE OF 2-115</scope>
    <scope>SUBUNIT</scope>
</reference>
<reference key="6">
    <citation type="journal article" date="1989" name="Biochemistry">
        <title>Comparative cross-linking study on the 50S ribosomal subunit from Escherichia coli.</title>
        <authorList>
            <person name="Walleczek J."/>
            <person name="Martin T."/>
            <person name="Redl B."/>
            <person name="Stoeffler-Meilicke M."/>
            <person name="Stoeffler G."/>
        </authorList>
    </citation>
    <scope>CROSS-LINKING TO L14</scope>
</reference>
<reference key="7">
    <citation type="journal article" date="1999" name="Anal. Biochem.">
        <title>Observation of Escherichia coli ribosomal proteins and their posttranslational modifications by mass spectrometry.</title>
        <authorList>
            <person name="Arnold R.J."/>
            <person name="Reilly J.P."/>
        </authorList>
    </citation>
    <scope>MASS SPECTROMETRY</scope>
    <scope>SUBUNIT</scope>
    <source>
        <strain>K12 / ATCC 25404 / DSM 5698 / NCIMB 11290</strain>
    </source>
</reference>
<reference key="8">
    <citation type="journal article" date="2014" name="Curr. Opin. Struct. Biol.">
        <title>A new system for naming ribosomal proteins.</title>
        <authorList>
            <person name="Ban N."/>
            <person name="Beckmann R."/>
            <person name="Cate J.H.D."/>
            <person name="Dinman J.D."/>
            <person name="Dragon F."/>
            <person name="Ellis S.R."/>
            <person name="Lafontaine D.L.J."/>
            <person name="Lindahl L."/>
            <person name="Liljas A."/>
            <person name="Lipton J.M."/>
            <person name="McAlear M.A."/>
            <person name="Moore P.B."/>
            <person name="Noller H.F."/>
            <person name="Ortega J."/>
            <person name="Panse V.G."/>
            <person name="Ramakrishnan V."/>
            <person name="Spahn C.M.T."/>
            <person name="Steitz T.A."/>
            <person name="Tchorzewski M."/>
            <person name="Tollervey D."/>
            <person name="Warren A.J."/>
            <person name="Williamson J.R."/>
            <person name="Wilson D."/>
            <person name="Yonath A."/>
            <person name="Yusupov M."/>
        </authorList>
    </citation>
    <scope>NOMENCLATURE</scope>
</reference>
<reference key="9">
    <citation type="journal article" date="2003" name="Cell">
        <title>Study of the structural dynamics of the E. coli 70S ribosome using real-space refinement.</title>
        <authorList>
            <person name="Gao H."/>
            <person name="Sengupta J."/>
            <person name="Valle M."/>
            <person name="Korostelev A."/>
            <person name="Eswar N."/>
            <person name="Stagg S.M."/>
            <person name="Van Roey P."/>
            <person name="Agrawal R.K."/>
            <person name="Harvey S.C."/>
            <person name="Sali A."/>
            <person name="Chapman M.S."/>
            <person name="Frank J."/>
        </authorList>
    </citation>
    <scope>STRUCTURE BY ELECTRON MICROSCOPY (11.50 ANGSTROMS)</scope>
    <scope>INTERSUBUNIT BRIDGE FORMATION</scope>
    <scope>SUBUNIT</scope>
    <source>
        <strain>MRE-600</strain>
    </source>
</reference>
<reference key="10">
    <citation type="journal article" date="2005" name="Science">
        <title>Structures of the bacterial ribosome at 3.5 A resolution.</title>
        <authorList>
            <person name="Schuwirth B.S."/>
            <person name="Borovinskaya M.A."/>
            <person name="Hau C.W."/>
            <person name="Zhang W."/>
            <person name="Vila-Sanjurjo A."/>
            <person name="Holton J.M."/>
            <person name="Cate J.H.D."/>
        </authorList>
    </citation>
    <scope>X-RAY CRYSTALLOGRAPHY (3.46 ANGSTROMS) OF 2 DIFFERENT RIBOSOME STRUCTURES</scope>
    <scope>SUBUNIT</scope>
    <source>
        <strain>MRE-600</strain>
    </source>
</reference>
<reference key="11">
    <citation type="journal article" date="2014" name="Cell Rep.">
        <title>Molecular basis for the ribosome functioning as an L-tryptophan sensor.</title>
        <authorList>
            <person name="Bischoff L."/>
            <person name="Berninghausen O."/>
            <person name="Beckmann R."/>
        </authorList>
    </citation>
    <scope>STRUCTURE BY ELECTRON MICROSCOPY (3.80 ANGSTROMS) OF 2-115 IN TNAC-STALLED 50S RIBOSOMAL SUBUNIT</scope>
    <scope>SUBUNIT</scope>
    <source>
        <strain>K12 / A19 / KC6</strain>
    </source>
</reference>
<reference key="12">
    <citation type="journal article" date="2014" name="PLoS Biol.">
        <title>Structural and functional insights into the mode of action of a universally conserved Obg GTPase.</title>
        <authorList>
            <person name="Feng B."/>
            <person name="Mandava C.S."/>
            <person name="Guo Q."/>
            <person name="Wang J."/>
            <person name="Cao W."/>
            <person name="Li N."/>
            <person name="Zhang Y."/>
            <person name="Zhang Y."/>
            <person name="Wang Z."/>
            <person name="Wu J."/>
            <person name="Sanyal S."/>
            <person name="Lei J."/>
            <person name="Gao N."/>
        </authorList>
    </citation>
    <scope>STRUCTURE BY ELECTRON MICROSCOPY (5.5 ANGSTROMS) OF 2-115 OF 50S RIBOSOMAL SUBUNIT IN COMPLEX WITH OBGE AND GMP-PNP</scope>
    <scope>SUBUNIT</scope>
</reference>
<reference key="13">
    <citation type="journal article" date="2017" name="Nature">
        <title>Mechanistic insights into the alternative translation termination by ArfA and RF2.</title>
        <authorList>
            <person name="Ma C."/>
            <person name="Kurita D."/>
            <person name="Li N."/>
            <person name="Chen Y."/>
            <person name="Himeno H."/>
            <person name="Gao N."/>
        </authorList>
    </citation>
    <scope>STRUCTURE BY ELECTRON MICROSCOPY (3.0 ANGSTROMS) OF 70S RIBOSOME IN COMPLEX WITH ARFA AND RF2</scope>
    <scope>SUBUNIT</scope>
</reference>
<reference key="14">
    <citation type="journal article" date="2017" name="Nature">
        <title>Structural basis for ArfA-RF2-mediated translation termination on mRNAs lacking stop codons.</title>
        <authorList>
            <person name="Huter P."/>
            <person name="Mueller C."/>
            <person name="Beckert B."/>
            <person name="Arenz S."/>
            <person name="Berninghausen O."/>
            <person name="Beckmann R."/>
            <person name="Wilson D.N."/>
        </authorList>
    </citation>
    <scope>STRUCTURE BY ELECTRON MICROSCOPY (3.1 ANGSTROMS) OF 70S RIBOSOME IN COMPLEX WITH ARFA AND RF2</scope>
    <scope>SUBUNIT</scope>
</reference>
<reference key="15">
    <citation type="journal article" date="2016" name="Science">
        <title>Translational termination without a stop codon.</title>
        <authorList>
            <person name="James N.R."/>
            <person name="Brown A."/>
            <person name="Gordiyenko Y."/>
            <person name="Ramakrishnan V."/>
        </authorList>
    </citation>
    <scope>STRUCTURE BY ELECTRON MICROSCOPY (2.97 ANGSTROMS) OF 70S RIBOSOME IN COMPLEX WITH ARFA AND RF2</scope>
    <scope>SUBUNIT</scope>
</reference>
<reference key="16">
    <citation type="journal article" date="2017" name="Nature">
        <title>Structural basis of co-translational quality control by ArfA and RF2 bound to ribosome.</title>
        <authorList>
            <person name="Zeng F."/>
            <person name="Chen Y."/>
            <person name="Remis J."/>
            <person name="Shekhar M."/>
            <person name="Phillips J.C."/>
            <person name="Tajkhorshid E."/>
            <person name="Jin H."/>
        </authorList>
    </citation>
    <scope>STRUCTURE BY ELECTRON MICROSCOPY (3.52 ANGSTROMS) OF 70S RIBOSOME IN COMPLEX WITH ARFA AND RF2</scope>
    <scope>SUBUNIT</scope>
</reference>
<reference evidence="16 17 18 19" key="17">
    <citation type="journal article" date="2021" name="Mol. Cell">
        <title>Snapshots of native pre-50S ribosomes reveal a biogenesis factor network and evolutionary specialization.</title>
        <authorList>
            <person name="Nikolay R."/>
            <person name="Hilal T."/>
            <person name="Schmidt S."/>
            <person name="Qin B."/>
            <person name="Schwefel D."/>
            <person name="Vieira-Vieira C.H."/>
            <person name="Mielke T."/>
            <person name="Burger J."/>
            <person name="Loerke J."/>
            <person name="Amikura K."/>
            <person name="Flugel T."/>
            <person name="Ueda T."/>
            <person name="Selbach M."/>
            <person name="Deuerling E."/>
            <person name="Spahn C.M.T."/>
        </authorList>
    </citation>
    <scope>STRUCTURE BY ELECTRON MICROSCOPY (2.40 ANGSTROMS) IN ASSOCIATION WITH PRE-50S RIBOSOMAL SUBUNIT</scope>
    <scope>FUNCTION IN 50S RIBOSOMAL SUBUNIT BIOGENESIS</scope>
    <scope>SUBUNIT</scope>
    <source>
        <strain>K12 / MG1655 / ATCC 47076</strain>
    </source>
</reference>
<evidence type="ECO:0000255" key="1">
    <source>
        <dbReference type="HAMAP-Rule" id="MF_00402"/>
    </source>
</evidence>
<evidence type="ECO:0000269" key="2">
    <source>
    </source>
</evidence>
<evidence type="ECO:0000269" key="3">
    <source>
    </source>
</evidence>
<evidence type="ECO:0000269" key="4">
    <source>
    </source>
</evidence>
<evidence type="ECO:0000269" key="5">
    <source>
    </source>
</evidence>
<evidence type="ECO:0000269" key="6">
    <source>
    </source>
</evidence>
<evidence type="ECO:0000269" key="7">
    <source>
    </source>
</evidence>
<evidence type="ECO:0000269" key="8">
    <source>
    </source>
</evidence>
<evidence type="ECO:0000269" key="9">
    <source>
    </source>
</evidence>
<evidence type="ECO:0000269" key="10">
    <source>
    </source>
</evidence>
<evidence type="ECO:0000269" key="11">
    <source>
    </source>
</evidence>
<evidence type="ECO:0000269" key="12">
    <source>
    </source>
</evidence>
<evidence type="ECO:0000269" key="13">
    <source>
    </source>
</evidence>
<evidence type="ECO:0000303" key="14">
    <source>
    </source>
</evidence>
<evidence type="ECO:0000305" key="15"/>
<evidence type="ECO:0007744" key="16">
    <source>
        <dbReference type="PDB" id="7BL2"/>
    </source>
</evidence>
<evidence type="ECO:0007744" key="17">
    <source>
        <dbReference type="PDB" id="7BL3"/>
    </source>
</evidence>
<evidence type="ECO:0007744" key="18">
    <source>
        <dbReference type="PDB" id="7BL4"/>
    </source>
</evidence>
<evidence type="ECO:0007744" key="19">
    <source>
        <dbReference type="PDB" id="7BL5"/>
    </source>
</evidence>
<evidence type="ECO:0007829" key="20">
    <source>
        <dbReference type="PDB" id="8AP4"/>
    </source>
</evidence>
<evidence type="ECO:0007829" key="21">
    <source>
        <dbReference type="PDB" id="8CGK"/>
    </source>
</evidence>
<organism>
    <name type="scientific">Escherichia coli (strain K12)</name>
    <dbReference type="NCBI Taxonomy" id="83333"/>
    <lineage>
        <taxon>Bacteria</taxon>
        <taxon>Pseudomonadati</taxon>
        <taxon>Pseudomonadota</taxon>
        <taxon>Gammaproteobacteria</taxon>
        <taxon>Enterobacterales</taxon>
        <taxon>Enterobacteriaceae</taxon>
        <taxon>Escherichia</taxon>
    </lineage>
</organism>
<sequence>MSNIIKQLEQEQMKQDVPSFRPGDTVEVKVWVVEGSKKRLQAFEGVVIAIRNRGLHSAFTVRKISNGEGVERVFQTHSPVVDSISVKRRGAVRKAKLYYLRERTGKAARIKERLN</sequence>
<gene>
    <name evidence="1" type="primary">rplS</name>
    <name type="ordered locus">b2606</name>
    <name type="ordered locus">JW2587</name>
</gene>
<accession>P0A7K6</accession>
<accession>P02420</accession>